<comment type="function">
    <molecule>Ubiquitin</molecule>
    <text evidence="4 16 17">Exists either covalently attached to another protein, or free (unanchored). When covalently bound, it is conjugated to target proteins via an isopeptide bond either as a monomer (monoubiquitin), a polymer linked via different Lys residues of the ubiquitin (polyubiquitin chains) or a linear polymer linked via the initiator Met of the ubiquitin (linear polyubiquitin chains). Polyubiquitin chains, when attached to a target protein, have different functions depending on the Lys residue of the ubiquitin that is linked: Lys-6-linked may be involved in DNA repair; Lys-11-linked is involved in ERAD (endoplasmic reticulum-associated degradation) and in cell-cycle regulation; Lys-29-linked is involved in proteotoxic stress response and cell cycle; Lys-33-linked is involved in kinase modification; Lys-48-linked is involved in protein degradation via the proteasome; Lys-63-linked is involved in endocytosis, DNA-damage responses as well as in signaling processes leading to activation of the transcription factor NF-kappa-B. Linear polymer chains formed via attachment by the initiator Met lead to cell signaling. Ubiquitin is usually conjugated to Lys residues of target proteins, however, in rare cases, conjugation to Cys or Ser residues has been observed. When polyubiquitin is free (unanchored-polyubiquitin), it also has distinct roles, such as in activation of protein kinases, and in signaling.</text>
</comment>
<comment type="subunit">
    <text evidence="14">Interacts with SKP1-KMD2A and SKP1-KMD2B complexes.</text>
</comment>
<comment type="interaction">
    <interactant intactId="EBI-413034">
        <id>P0CG47</id>
    </interactant>
    <interactant intactId="EBI-77613">
        <id>P05067</id>
        <label>APP</label>
    </interactant>
    <organismsDiffer>false</organismsDiffer>
    <experiments>3</experiments>
</comment>
<comment type="interaction">
    <interactant intactId="EBI-413034">
        <id>P0CG47</id>
    </interactant>
    <interactant intactId="EBI-723996">
        <id>Q8IVM0</id>
        <label>CCDC50</label>
    </interactant>
    <organismsDiffer>false</organismsDiffer>
    <experiments>2</experiments>
</comment>
<comment type="interaction">
    <interactant intactId="EBI-413034">
        <id>P0CG47</id>
    </interactant>
    <interactant intactId="EBI-2876678">
        <id>Q9H305</id>
        <label>CDIP1</label>
    </interactant>
    <organismsDiffer>false</organismsDiffer>
    <experiments>3</experiments>
</comment>
<comment type="interaction">
    <interactant intactId="EBI-413034">
        <id>P0CG47</id>
    </interactant>
    <interactant intactId="EBI-9996254">
        <id>Q6ZTR5</id>
        <label>CFAP47</label>
    </interactant>
    <organismsDiffer>false</organismsDiffer>
    <experiments>2</experiments>
</comment>
<comment type="interaction">
    <interactant intactId="EBI-413034">
        <id>P0CG47</id>
    </interactant>
    <interactant intactId="EBI-12868028">
        <id>A0PJX0</id>
        <label>CIB4</label>
    </interactant>
    <organismsDiffer>false</organismsDiffer>
    <experiments>2</experiments>
</comment>
<comment type="interaction">
    <interactant intactId="EBI-413034">
        <id>P0CG47</id>
    </interactant>
    <interactant intactId="EBI-21841279">
        <id>O75881</id>
        <label>CYP7B1</label>
    </interactant>
    <organismsDiffer>false</organismsDiffer>
    <experiments>2</experiments>
</comment>
<comment type="interaction">
    <interactant intactId="EBI-413034">
        <id>P0CG47</id>
    </interactant>
    <interactant intactId="EBI-724310">
        <id>Q15038</id>
        <label>DAZAP2</label>
    </interactant>
    <organismsDiffer>false</organismsDiffer>
    <experiments>7</experiments>
</comment>
<comment type="interaction">
    <interactant intactId="EBI-413034">
        <id>P0CG47</id>
    </interactant>
    <interactant intactId="EBI-2806959">
        <id>Q6ICB0</id>
        <label>DESI1</label>
    </interactant>
    <organismsDiffer>false</organismsDiffer>
    <experiments>3</experiments>
</comment>
<comment type="interaction">
    <interactant intactId="EBI-413034">
        <id>P0CG47</id>
    </interactant>
    <interactant intactId="EBI-975493">
        <id>P28562</id>
        <label>DUSP1</label>
    </interactant>
    <organismsDiffer>false</organismsDiffer>
    <experiments>2</experiments>
</comment>
<comment type="interaction">
    <interactant intactId="EBI-413034">
        <id>P0CG47</id>
    </interactant>
    <interactant intactId="EBI-21842236">
        <id>Q9UKT6</id>
        <label>FBXL21P</label>
    </interactant>
    <organismsDiffer>false</organismsDiffer>
    <experiments>2</experiments>
</comment>
<comment type="interaction">
    <interactant intactId="EBI-413034">
        <id>P0CG47</id>
    </interactant>
    <interactant intactId="EBI-447141">
        <id>Q9UJY5</id>
        <label>GGA1</label>
    </interactant>
    <organismsDiffer>false</organismsDiffer>
    <experiments>3</experiments>
</comment>
<comment type="interaction">
    <interactant intactId="EBI-413034">
        <id>P0CG47</id>
    </interactant>
    <interactant intactId="EBI-447404">
        <id>Q9NZ52</id>
        <label>GGA3</label>
    </interactant>
    <organismsDiffer>false</organismsDiffer>
    <experiments>2</experiments>
</comment>
<comment type="interaction">
    <interactant intactId="EBI-413034">
        <id>P0CG47</id>
    </interactant>
    <interactant intactId="EBI-355924">
        <id>P33993</id>
        <label>MCM7</label>
    </interactant>
    <organismsDiffer>false</organismsDiffer>
    <experiments>2</experiments>
</comment>
<comment type="interaction">
    <interactant intactId="EBI-413034">
        <id>P0CG47</id>
    </interactant>
    <interactant intactId="EBI-11980301">
        <id>Q8N3F0</id>
        <label>MTURN</label>
    </interactant>
    <organismsDiffer>false</organismsDiffer>
    <experiments>3</experiments>
</comment>
<comment type="interaction">
    <interactant intactId="EBI-413034">
        <id>P0CG47</id>
    </interactant>
    <interactant intactId="EBI-726944">
        <id>P46934</id>
        <label>NEDD4</label>
    </interactant>
    <organismsDiffer>false</organismsDiffer>
    <experiments>2</experiments>
</comment>
<comment type="interaction">
    <interactant intactId="EBI-413034">
        <id>P0CG47</id>
    </interactant>
    <interactant intactId="EBI-1058491">
        <id>Q96FW1</id>
        <label>OTUB1</label>
    </interactant>
    <organismsDiffer>false</organismsDiffer>
    <experiments>3</experiments>
</comment>
<comment type="interaction">
    <interactant intactId="EBI-413034">
        <id>P0CG47</id>
    </interactant>
    <interactant intactId="EBI-25830200">
        <id>Q6GQQ9-2</id>
        <label>OTUD7B</label>
    </interactant>
    <organismsDiffer>false</organismsDiffer>
    <experiments>3</experiments>
</comment>
<comment type="interaction">
    <interactant intactId="EBI-413034">
        <id>P0CG47</id>
    </interactant>
    <interactant intactId="EBI-373552">
        <id>Q96CS7</id>
        <label>PLEKHB2</label>
    </interactant>
    <organismsDiffer>false</organismsDiffer>
    <experiments>3</experiments>
</comment>
<comment type="interaction">
    <interactant intactId="EBI-413034">
        <id>P0CG47</id>
    </interactant>
    <interactant intactId="EBI-769257">
        <id>Q9NRQ2</id>
        <label>PLSCR4</label>
    </interactant>
    <organismsDiffer>false</organismsDiffer>
    <experiments>3</experiments>
</comment>
<comment type="interaction">
    <interactant intactId="EBI-413034">
        <id>P0CG47</id>
    </interactant>
    <interactant intactId="EBI-21251460">
        <id>O60260-5</id>
        <label>PRKN</label>
    </interactant>
    <organismsDiffer>false</organismsDiffer>
    <experiments>6</experiments>
</comment>
<comment type="interaction">
    <interactant intactId="EBI-413034">
        <id>P0CG47</id>
    </interactant>
    <interactant intactId="EBI-913954">
        <id>Q9UJ41</id>
        <label>RABGEF1</label>
    </interactant>
    <organismsDiffer>false</organismsDiffer>
    <experiments>6</experiments>
</comment>
<comment type="interaction">
    <interactant intactId="EBI-413034">
        <id>P0CG47</id>
    </interactant>
    <interactant intactId="EBI-954531">
        <id>P54727</id>
        <label>RAD23B</label>
    </interactant>
    <organismsDiffer>false</organismsDiffer>
    <experiments>5</experiments>
</comment>
<comment type="interaction">
    <interactant intactId="EBI-413034">
        <id>P0CG47</id>
    </interactant>
    <interactant intactId="EBI-396669">
        <id>Q9Y3C5</id>
        <label>RNF11</label>
    </interactant>
    <organismsDiffer>false</organismsDiffer>
    <experiments>4</experiments>
</comment>
<comment type="interaction">
    <interactant intactId="EBI-413034">
        <id>P0CG47</id>
    </interactant>
    <interactant intactId="EBI-1647060">
        <id>Q68DV7</id>
        <label>RNF43</label>
    </interactant>
    <organismsDiffer>false</organismsDiffer>
    <experiments>2</experiments>
</comment>
<comment type="interaction">
    <interactant intactId="EBI-413034">
        <id>P0CG47</id>
    </interactant>
    <interactant intactId="EBI-752324">
        <id>Q8N488</id>
        <label>RYBP</label>
    </interactant>
    <organismsDiffer>false</organismsDiffer>
    <experiments>3</experiments>
</comment>
<comment type="interaction">
    <interactant intactId="EBI-413034">
        <id>P0CG47</id>
    </interactant>
    <interactant intactId="EBI-727004">
        <id>O00560</id>
        <label>SDCBP</label>
    </interactant>
    <organismsDiffer>false</organismsDiffer>
    <experiments>3</experiments>
</comment>
<comment type="interaction">
    <interactant intactId="EBI-413034">
        <id>P0CG47</id>
    </interactant>
    <interactant intactId="EBI-396727">
        <id>Q9HAU4</id>
        <label>SMURF2</label>
    </interactant>
    <organismsDiffer>false</organismsDiffer>
    <experiments>4</experiments>
</comment>
<comment type="interaction">
    <interactant intactId="EBI-413034">
        <id>P0CG47</id>
    </interactant>
    <interactant intactId="EBI-990792">
        <id>P00441</id>
        <label>SOD1</label>
    </interactant>
    <organismsDiffer>false</organismsDiffer>
    <experiments>3</experiments>
</comment>
<comment type="interaction">
    <interactant intactId="EBI-413034">
        <id>P0CG47</id>
    </interactant>
    <interactant intactId="EBI-373258">
        <id>O75886</id>
        <label>STAM2</label>
    </interactant>
    <organismsDiffer>false</organismsDiffer>
    <experiments>3</experiments>
</comment>
<comment type="interaction">
    <interactant intactId="EBI-413034">
        <id>P0CG47</id>
    </interactant>
    <interactant intactId="EBI-396676">
        <id>O95630</id>
        <label>STAMBP</label>
    </interactant>
    <organismsDiffer>false</organismsDiffer>
    <experiments>4</experiments>
</comment>
<comment type="interaction">
    <interactant intactId="EBI-413034">
        <id>P0CG47</id>
    </interactant>
    <interactant intactId="EBI-529518">
        <id>Q86VP1</id>
        <label>TAX1BP1</label>
    </interactant>
    <organismsDiffer>false</organismsDiffer>
    <experiments>3</experiments>
</comment>
<comment type="interaction">
    <interactant intactId="EBI-413034">
        <id>P0CG47</id>
    </interactant>
    <interactant intactId="EBI-749370">
        <id>Q9BSL1</id>
        <label>UBAC1</label>
    </interactant>
    <organismsDiffer>false</organismsDiffer>
    <experiments>5</experiments>
</comment>
<comment type="interaction">
    <interactant intactId="EBI-413034">
        <id>P0CG47</id>
    </interactant>
    <interactant intactId="EBI-947187">
        <id>Q9UHD9</id>
        <label>UBQLN2</label>
    </interactant>
    <organismsDiffer>false</organismsDiffer>
    <experiments>3</experiments>
</comment>
<comment type="interaction">
    <interactant intactId="EBI-413034">
        <id>P0CG47</id>
    </interactant>
    <interactant intactId="EBI-12072186">
        <id>P45974-2</id>
        <label>USP5</label>
    </interactant>
    <organismsDiffer>false</organismsDiffer>
    <experiments>3</experiments>
</comment>
<comment type="interaction">
    <interactant intactId="EBI-413034">
        <id>P0CG47</id>
    </interactant>
    <interactant intactId="EBI-25835937">
        <id>Q8NA23-2</id>
        <label>WDR31</label>
    </interactant>
    <organismsDiffer>false</organismsDiffer>
    <experiments>3</experiments>
</comment>
<comment type="interaction">
    <interactant intactId="EBI-413034">
        <id>P0CG47</id>
    </interactant>
    <interactant intactId="EBI-493888">
        <id>Q60592</id>
        <label>Mast2</label>
    </interactant>
    <organismsDiffer>true</organismsDiffer>
    <experiments>2</experiments>
</comment>
<comment type="interaction">
    <interactant intactId="EBI-413034">
        <id>P0CG47</id>
    </interactant>
    <interactant intactId="EBI-8433218">
        <id>Q9DLK6</id>
        <label>NP</label>
    </interactant>
    <organismsDiffer>true</organismsDiffer>
    <experiments>2</experiments>
</comment>
<comment type="interaction">
    <interactant intactId="EBI-413034">
        <id>P0CG47</id>
    </interactant>
    <interactant intactId="EBI-1208116">
        <id>P24610</id>
        <label>Pax3</label>
    </interactant>
    <organismsDiffer>true</organismsDiffer>
    <experiments>2</experiments>
</comment>
<comment type="subcellular location">
    <molecule>Ubiquitin</molecule>
    <subcellularLocation>
        <location evidence="1">Cytoplasm</location>
    </subcellularLocation>
    <subcellularLocation>
        <location evidence="1">Nucleus</location>
    </subcellularLocation>
    <subcellularLocation>
        <location evidence="7">Mitochondrion outer membrane</location>
        <topology evidence="22">Peripheral membrane protein</topology>
    </subcellularLocation>
</comment>
<comment type="PTM">
    <molecule>Ubiquitin</molecule>
    <text evidence="6 7 8 9 12">Phosphorylated at Ser-65 by PINK1 during mitophagy (PubMed:24660806, PubMed:24751536, PubMed:24784582, PubMed:25527291, PubMed:26161729). Phosphorylated ubiquitin specifically binds and activates parkin (PRKN), triggering mitophagy (PubMed:24660806, PubMed:24751536, PubMed:24784582, PubMed:25527291, PubMed:26161729). Phosphorylation does not affect E1-mediated E2 charging of ubiquitin but affects discharging of E2 enzymes to form polyubiquitin chains. It also affects deubiquitination by deubiquitinase enzymes such as USP30 (PubMed:25527291).</text>
</comment>
<comment type="PTM">
    <molecule>Ubiquitin</molecule>
    <text evidence="13">Mono-ADP-ribosylated at the C-terminus by PARP9, a component of the PPAR9-DTX3L complex. ADP-ribosylation requires processing by E1 and E2 enzymes and prevents ubiquitin conjugation to substrates such as histones.</text>
</comment>
<comment type="PTM">
    <molecule>Ubiquitin</molecule>
    <text evidence="15">(Microbial infection) Mono-ADP-ribosylated at Thr-66 by the C.violaceum CteC virulence factor. ADP-ribosylation causes the shutdown of polyubiquitin synthesis and disrupts the recognition and reversal of polyubiquitin.</text>
</comment>
<comment type="miscellaneous">
    <text>Ubiquitin is encoded by 4 different genes. UBA52 and RPS27A genes code for a single copy of ubiquitin fused to the ribosomal proteins eL40 and eS31, respectively. UBB and UBC genes code for a polyubiquitin precursor with exact head to tail repeats, the number of repeats differ between species and strains.</text>
</comment>
<comment type="miscellaneous">
    <text evidence="19 21 23">The mRNA encoding variant UBB(+1) is produced by an unknown mechanism involving the deletion of a GT dinucleotide in the close proximity of a GAGAG motif (PubMed:9422699). This variant mRNA is found in normal brain, but the encoded protein accumulates only in brain neurofibrillary tangles and neuritic plaques in Alzheimer disease and other tauopathies, as well as polyglutaminopathies (PubMed:14597671). UBB(+1) variant cannot be used for polyubiquitination, is not effectively degraded by the proteasome when ubiquitinated and ubiquitinated UBB(+1) is refractory to disassembly by deubiquitinating enzymes (DUBs). In healthy brain, UBB(+1) C-terminus can be cleaved by UCHL3 (PubMed:21762696).</text>
</comment>
<comment type="miscellaneous">
    <text>For a better understanding, features related to ubiquitin are only indicated for the first chain.</text>
</comment>
<comment type="similarity">
    <text evidence="18">Belongs to the ubiquitin family.</text>
</comment>
<protein>
    <recommendedName>
        <fullName>Polyubiquitin-B</fullName>
    </recommendedName>
    <component>
        <recommendedName>
            <fullName>Ubiquitin</fullName>
        </recommendedName>
    </component>
</protein>
<organism>
    <name type="scientific">Homo sapiens</name>
    <name type="common">Human</name>
    <dbReference type="NCBI Taxonomy" id="9606"/>
    <lineage>
        <taxon>Eukaryota</taxon>
        <taxon>Metazoa</taxon>
        <taxon>Chordata</taxon>
        <taxon>Craniata</taxon>
        <taxon>Vertebrata</taxon>
        <taxon>Euteleostomi</taxon>
        <taxon>Mammalia</taxon>
        <taxon>Eutheria</taxon>
        <taxon>Euarchontoglires</taxon>
        <taxon>Primates</taxon>
        <taxon>Haplorrhini</taxon>
        <taxon>Catarrhini</taxon>
        <taxon>Hominidae</taxon>
        <taxon>Homo</taxon>
    </lineage>
</organism>
<dbReference type="EMBL" id="X04803">
    <property type="protein sequence ID" value="CAA28495.1"/>
    <property type="molecule type" value="Genomic_DNA"/>
</dbReference>
<dbReference type="EMBL" id="AB089617">
    <property type="protein sequence ID" value="BAC56955.1"/>
    <property type="molecule type" value="Genomic_DNA"/>
</dbReference>
<dbReference type="EMBL" id="AC093484">
    <property type="status" value="NOT_ANNOTATED_CDS"/>
    <property type="molecule type" value="Genomic_DNA"/>
</dbReference>
<dbReference type="EMBL" id="BC000379">
    <property type="protein sequence ID" value="AAH00379.1"/>
    <property type="molecule type" value="mRNA"/>
</dbReference>
<dbReference type="EMBL" id="BC009301">
    <property type="protein sequence ID" value="AAH09301.1"/>
    <property type="molecule type" value="mRNA"/>
</dbReference>
<dbReference type="EMBL" id="BC015127">
    <property type="protein sequence ID" value="AAH15127.1"/>
    <property type="molecule type" value="mRNA"/>
</dbReference>
<dbReference type="EMBL" id="BC026301">
    <property type="protein sequence ID" value="AAH26301.1"/>
    <property type="molecule type" value="mRNA"/>
</dbReference>
<dbReference type="EMBL" id="BC031027">
    <property type="protein sequence ID" value="AAH31027.1"/>
    <property type="molecule type" value="mRNA"/>
</dbReference>
<dbReference type="EMBL" id="BC046123">
    <property type="protein sequence ID" value="AAH46123.1"/>
    <property type="molecule type" value="mRNA"/>
</dbReference>
<dbReference type="CCDS" id="CCDS11177.1"/>
<dbReference type="PIR" id="A26437">
    <property type="entry name" value="UQHUB"/>
</dbReference>
<dbReference type="RefSeq" id="NP_001268645.1">
    <property type="nucleotide sequence ID" value="NM_001281716.2"/>
</dbReference>
<dbReference type="RefSeq" id="NP_001268646.1">
    <property type="nucleotide sequence ID" value="NM_001281717.1"/>
</dbReference>
<dbReference type="RefSeq" id="NP_001268647.1">
    <property type="nucleotide sequence ID" value="NM_001281718.1"/>
</dbReference>
<dbReference type="RefSeq" id="NP_001268648.1">
    <property type="nucleotide sequence ID" value="NM_001281719.1"/>
</dbReference>
<dbReference type="RefSeq" id="NP_001268649.1">
    <property type="nucleotide sequence ID" value="NM_001281720.2"/>
</dbReference>
<dbReference type="RefSeq" id="NP_061828.1">
    <property type="nucleotide sequence ID" value="NM_018955.4"/>
</dbReference>
<dbReference type="PDB" id="2KHW">
    <property type="method" value="NMR"/>
    <property type="chains" value="B=153-228"/>
</dbReference>
<dbReference type="PDB" id="2MBB">
    <property type="method" value="NMR"/>
    <property type="chains" value="B=153-228"/>
</dbReference>
<dbReference type="PDB" id="2MRO">
    <property type="method" value="NMR"/>
    <property type="chains" value="A=153-228"/>
</dbReference>
<dbReference type="PDB" id="2MSG">
    <property type="method" value="NMR"/>
    <property type="chains" value="A=153-224"/>
</dbReference>
<dbReference type="PDB" id="2N13">
    <property type="method" value="NMR"/>
    <property type="chains" value="B=153-228, C=153-229"/>
</dbReference>
<dbReference type="PDB" id="4UEL">
    <property type="method" value="X-ray"/>
    <property type="resolution" value="2.30 A"/>
    <property type="chains" value="B=153-228"/>
</dbReference>
<dbReference type="PDB" id="4UF6">
    <property type="method" value="X-ray"/>
    <property type="resolution" value="3.69 A"/>
    <property type="chains" value="B/E/H/K=153-227"/>
</dbReference>
<dbReference type="PDB" id="4WHV">
    <property type="method" value="X-ray"/>
    <property type="resolution" value="8.30 A"/>
    <property type="chains" value="A/F/G/L=153-228"/>
</dbReference>
<dbReference type="PDB" id="4WLR">
    <property type="method" value="X-ray"/>
    <property type="resolution" value="2.00 A"/>
    <property type="chains" value="C=153-228"/>
</dbReference>
<dbReference type="PDB" id="4WUR">
    <property type="method" value="X-ray"/>
    <property type="resolution" value="3.16 A"/>
    <property type="chains" value="B=153-228"/>
</dbReference>
<dbReference type="PDB" id="4XOF">
    <property type="method" value="X-ray"/>
    <property type="resolution" value="1.15 A"/>
    <property type="chains" value="A=153-228"/>
</dbReference>
<dbReference type="PDB" id="4ZFR">
    <property type="method" value="X-ray"/>
    <property type="resolution" value="1.72 A"/>
    <property type="chains" value="B=153-228"/>
</dbReference>
<dbReference type="PDB" id="4ZFT">
    <property type="method" value="X-ray"/>
    <property type="resolution" value="2.30 A"/>
    <property type="chains" value="B/D=153-228"/>
</dbReference>
<dbReference type="PDB" id="4ZPZ">
    <property type="method" value="X-ray"/>
    <property type="resolution" value="1.54 A"/>
    <property type="chains" value="A/B=153-225"/>
</dbReference>
<dbReference type="PDB" id="4ZUX">
    <property type="method" value="X-ray"/>
    <property type="resolution" value="3.82 A"/>
    <property type="chains" value="X/c/h/m=153-228"/>
</dbReference>
<dbReference type="PDB" id="5BNB">
    <property type="method" value="X-ray"/>
    <property type="resolution" value="2.49 A"/>
    <property type="chains" value="E/F/G/I=153-229"/>
</dbReference>
<dbReference type="PDB" id="5CAW">
    <property type="method" value="X-ray"/>
    <property type="resolution" value="2.62 A"/>
    <property type="chains" value="B/D=153-228"/>
</dbReference>
<dbReference type="PDB" id="5CRA">
    <property type="method" value="X-ray"/>
    <property type="resolution" value="2.64 A"/>
    <property type="chains" value="C/D=153-227"/>
</dbReference>
<dbReference type="PDB" id="5CVM">
    <property type="method" value="X-ray"/>
    <property type="resolution" value="1.90 A"/>
    <property type="chains" value="B=153-211"/>
</dbReference>
<dbReference type="PDB" id="5CVN">
    <property type="method" value="X-ray"/>
    <property type="resolution" value="3.36 A"/>
    <property type="chains" value="D=153-228"/>
</dbReference>
<dbReference type="PDB" id="5CVO">
    <property type="method" value="X-ray"/>
    <property type="resolution" value="3.88 A"/>
    <property type="chains" value="C/F=153-228"/>
</dbReference>
<dbReference type="PDB" id="5D0K">
    <property type="method" value="X-ray"/>
    <property type="resolution" value="2.65 A"/>
    <property type="chains" value="B/E/H/K=153-228"/>
</dbReference>
<dbReference type="PDB" id="5D0M">
    <property type="method" value="X-ray"/>
    <property type="resolution" value="1.91 A"/>
    <property type="chains" value="B=153-228"/>
</dbReference>
<dbReference type="PDB" id="5DFL">
    <property type="method" value="X-ray"/>
    <property type="resolution" value="2.10 A"/>
    <property type="chains" value="B=153-228"/>
</dbReference>
<dbReference type="PDB" id="5DK8">
    <property type="method" value="X-ray"/>
    <property type="resolution" value="1.32 A"/>
    <property type="chains" value="A/B=154-227"/>
</dbReference>
<dbReference type="PDB" id="5E6J">
    <property type="method" value="X-ray"/>
    <property type="resolution" value="2.85 A"/>
    <property type="chains" value="C/F=153-227"/>
</dbReference>
<dbReference type="PDB" id="5EDV">
    <property type="method" value="X-ray"/>
    <property type="resolution" value="3.48 A"/>
    <property type="chains" value="E/F/G/H=153-228"/>
</dbReference>
<dbReference type="PDB" id="5EMZ">
    <property type="method" value="X-ray"/>
    <property type="resolution" value="1.66 A"/>
    <property type="chains" value="A/B/C/D/E/F=1-76"/>
</dbReference>
<dbReference type="PDB" id="5EYA">
    <property type="method" value="X-ray"/>
    <property type="resolution" value="2.40 A"/>
    <property type="chains" value="C/D=153-228"/>
</dbReference>
<dbReference type="PDB" id="5GJQ">
    <property type="method" value="EM"/>
    <property type="resolution" value="4.50 A"/>
    <property type="chains" value="y=153-228"/>
</dbReference>
<dbReference type="PDB" id="5GO7">
    <property type="method" value="X-ray"/>
    <property type="resolution" value="1.80 A"/>
    <property type="chains" value="A=1-76"/>
</dbReference>
<dbReference type="PDB" id="5GO8">
    <property type="method" value="X-ray"/>
    <property type="resolution" value="2.21 A"/>
    <property type="chains" value="A=1-76"/>
</dbReference>
<dbReference type="PDB" id="5GOB">
    <property type="method" value="X-ray"/>
    <property type="resolution" value="1.15 A"/>
    <property type="chains" value="A=1-76"/>
</dbReference>
<dbReference type="PDB" id="5GOC">
    <property type="method" value="X-ray"/>
    <property type="resolution" value="1.73 A"/>
    <property type="chains" value="A=1-76"/>
</dbReference>
<dbReference type="PDB" id="5GOD">
    <property type="method" value="X-ray"/>
    <property type="resolution" value="1.15 A"/>
    <property type="chains" value="A/B=1-76"/>
</dbReference>
<dbReference type="PDB" id="5GOG">
    <property type="method" value="X-ray"/>
    <property type="resolution" value="1.98 A"/>
    <property type="chains" value="A=1-76"/>
</dbReference>
<dbReference type="PDB" id="5GOH">
    <property type="method" value="X-ray"/>
    <property type="resolution" value="1.95 A"/>
    <property type="chains" value="A=1-76"/>
</dbReference>
<dbReference type="PDB" id="5GOI">
    <property type="method" value="X-ray"/>
    <property type="resolution" value="1.59 A"/>
    <property type="chains" value="A/B=1-76"/>
</dbReference>
<dbReference type="PDB" id="5GOJ">
    <property type="method" value="X-ray"/>
    <property type="resolution" value="1.55 A"/>
    <property type="chains" value="A=1-76"/>
</dbReference>
<dbReference type="PDB" id="5GOK">
    <property type="method" value="X-ray"/>
    <property type="resolution" value="1.84 A"/>
    <property type="chains" value="A=1-76"/>
</dbReference>
<dbReference type="PDB" id="5H7S">
    <property type="method" value="X-ray"/>
    <property type="resolution" value="3.49 A"/>
    <property type="chains" value="E/F=1-76"/>
</dbReference>
<dbReference type="PDB" id="5IBK">
    <property type="method" value="X-ray"/>
    <property type="resolution" value="2.50 A"/>
    <property type="chains" value="C/F=151-226"/>
</dbReference>
<dbReference type="PDB" id="5IFR">
    <property type="method" value="X-ray"/>
    <property type="resolution" value="2.20 A"/>
    <property type="chains" value="B=153-227"/>
</dbReference>
<dbReference type="PDB" id="5JBY">
    <property type="method" value="X-ray"/>
    <property type="resolution" value="1.99 A"/>
    <property type="chains" value="A/C/E=153-228"/>
</dbReference>
<dbReference type="PDB" id="5JG6">
    <property type="method" value="X-ray"/>
    <property type="resolution" value="2.00 A"/>
    <property type="chains" value="B/C=76-153"/>
</dbReference>
<dbReference type="PDB" id="5JP3">
    <property type="method" value="X-ray"/>
    <property type="resolution" value="2.90 A"/>
    <property type="chains" value="B/D/F/H=153-227"/>
</dbReference>
<dbReference type="PDB" id="5JTJ">
    <property type="method" value="X-ray"/>
    <property type="resolution" value="3.32 A"/>
    <property type="chains" value="B=153-228"/>
</dbReference>
<dbReference type="PDB" id="5JTV">
    <property type="method" value="X-ray"/>
    <property type="resolution" value="3.31 A"/>
    <property type="chains" value="B/D/F/H=1-76"/>
</dbReference>
<dbReference type="PDB" id="5K9P">
    <property type="method" value="X-ray"/>
    <property type="resolution" value="1.55 A"/>
    <property type="chains" value="A=153-228"/>
</dbReference>
<dbReference type="PDB" id="5KGF">
    <property type="method" value="EM"/>
    <property type="resolution" value="4.54 A"/>
    <property type="chains" value="M/O=153-228"/>
</dbReference>
<dbReference type="PDB" id="5KHY">
    <property type="method" value="X-ray"/>
    <property type="resolution" value="3.50 A"/>
    <property type="chains" value="A=153-225, B=153-227"/>
</dbReference>
<dbReference type="PDB" id="5KYC">
    <property type="method" value="X-ray"/>
    <property type="resolution" value="1.43 A"/>
    <property type="chains" value="C=153-228"/>
</dbReference>
<dbReference type="PDB" id="5KYD">
    <property type="method" value="X-ray"/>
    <property type="resolution" value="1.62 A"/>
    <property type="chains" value="D=153-228"/>
</dbReference>
<dbReference type="PDB" id="5KYE">
    <property type="method" value="X-ray"/>
    <property type="resolution" value="1.97 A"/>
    <property type="chains" value="C/D=153-228"/>
</dbReference>
<dbReference type="PDB" id="5KYF">
    <property type="method" value="X-ray"/>
    <property type="resolution" value="1.45 A"/>
    <property type="chains" value="C=153-228"/>
</dbReference>
<dbReference type="PDB" id="5L8H">
    <property type="method" value="X-ray"/>
    <property type="resolution" value="1.85 A"/>
    <property type="chains" value="B=1-76"/>
</dbReference>
<dbReference type="PDB" id="5L8W">
    <property type="method" value="X-ray"/>
    <property type="resolution" value="2.79 A"/>
    <property type="chains" value="C=1-75"/>
</dbReference>
<dbReference type="PDB" id="5L9T">
    <property type="method" value="EM"/>
    <property type="resolution" value="6.40 A"/>
    <property type="chains" value="S=1-73"/>
</dbReference>
<dbReference type="PDB" id="5LN1">
    <property type="method" value="X-ray"/>
    <property type="resolution" value="3.14 A"/>
    <property type="chains" value="U=1-76"/>
</dbReference>
<dbReference type="PDB" id="5LRV">
    <property type="method" value="X-ray"/>
    <property type="resolution" value="2.80 A"/>
    <property type="chains" value="B=1-76, C=1-75"/>
</dbReference>
<dbReference type="PDB" id="5LRW">
    <property type="method" value="X-ray"/>
    <property type="resolution" value="2.00 A"/>
    <property type="chains" value="B/D=1-75"/>
</dbReference>
<dbReference type="PDB" id="5LRX">
    <property type="method" value="X-ray"/>
    <property type="resolution" value="2.85 A"/>
    <property type="chains" value="B/D=1-76"/>
</dbReference>
<dbReference type="PDB" id="5M93">
    <property type="method" value="X-ray"/>
    <property type="resolution" value="1.79 A"/>
    <property type="chains" value="A/B/C=1-76"/>
</dbReference>
<dbReference type="PDB" id="5MNJ">
    <property type="method" value="X-ray"/>
    <property type="resolution" value="2.16 A"/>
    <property type="chains" value="B/F=1-76"/>
</dbReference>
<dbReference type="PDB" id="5N2W">
    <property type="method" value="X-ray"/>
    <property type="resolution" value="2.68 A"/>
    <property type="chains" value="B=1-76"/>
</dbReference>
<dbReference type="PDB" id="5N38">
    <property type="method" value="X-ray"/>
    <property type="resolution" value="2.60 A"/>
    <property type="chains" value="B=1-76"/>
</dbReference>
<dbReference type="PDB" id="5NL5">
    <property type="method" value="X-ray"/>
    <property type="resolution" value="1.96 A"/>
    <property type="chains" value="A/B/C=1-76"/>
</dbReference>
<dbReference type="PDB" id="5NLJ">
    <property type="method" value="X-ray"/>
    <property type="resolution" value="1.53 A"/>
    <property type="chains" value="A/B/C=1-76"/>
</dbReference>
<dbReference type="PDB" id="5NVG">
    <property type="method" value="X-ray"/>
    <property type="resolution" value="1.07 A"/>
    <property type="chains" value="A=1-76"/>
</dbReference>
<dbReference type="PDB" id="5O44">
    <property type="method" value="X-ray"/>
    <property type="resolution" value="3.14 A"/>
    <property type="chains" value="B/C=1-74, D/F=1-76"/>
</dbReference>
<dbReference type="PDB" id="5O6T">
    <property type="method" value="X-ray"/>
    <property type="resolution" value="1.57 A"/>
    <property type="chains" value="C/D=1-76"/>
</dbReference>
<dbReference type="PDB" id="5OHK">
    <property type="method" value="X-ray"/>
    <property type="resolution" value="2.34 A"/>
    <property type="chains" value="B=1-76"/>
</dbReference>
<dbReference type="PDB" id="5OHL">
    <property type="method" value="X-ray"/>
    <property type="resolution" value="2.50 A"/>
    <property type="chains" value="I/J/K/L/M/N/O/P=1-76"/>
</dbReference>
<dbReference type="PDB" id="5OHN">
    <property type="method" value="X-ray"/>
    <property type="resolution" value="3.60 A"/>
    <property type="chains" value="B/D=1-76"/>
</dbReference>
<dbReference type="PDB" id="5OHP">
    <property type="method" value="X-ray"/>
    <property type="resolution" value="2.80 A"/>
    <property type="chains" value="B/C=1-76"/>
</dbReference>
<dbReference type="PDB" id="5TOF">
    <property type="method" value="X-ray"/>
    <property type="resolution" value="1.12 A"/>
    <property type="chains" value="A=1-76"/>
</dbReference>
<dbReference type="PDB" id="5TOG">
    <property type="method" value="X-ray"/>
    <property type="resolution" value="1.08 A"/>
    <property type="chains" value="A=1-76"/>
</dbReference>
<dbReference type="PDB" id="5TUT">
    <property type="method" value="X-ray"/>
    <property type="resolution" value="2.60 A"/>
    <property type="chains" value="B=1-76"/>
</dbReference>
<dbReference type="PDB" id="5TXK">
    <property type="method" value="X-ray"/>
    <property type="resolution" value="1.84 A"/>
    <property type="chains" value="B=1-76"/>
</dbReference>
<dbReference type="PDB" id="5UJL">
    <property type="method" value="NMR"/>
    <property type="chains" value="A/B=1-76"/>
</dbReference>
<dbReference type="PDB" id="5UJN">
    <property type="method" value="NMR"/>
    <property type="chains" value="A/B=1-76"/>
</dbReference>
<dbReference type="PDB" id="5ULF">
    <property type="method" value="X-ray"/>
    <property type="resolution" value="1.80 A"/>
    <property type="chains" value="B/D=1-76"/>
</dbReference>
<dbReference type="PDB" id="5ULH">
    <property type="method" value="X-ray"/>
    <property type="resolution" value="1.95 A"/>
    <property type="chains" value="B=1-76"/>
</dbReference>
<dbReference type="PDB" id="5ULK">
    <property type="method" value="X-ray"/>
    <property type="resolution" value="2.38 A"/>
    <property type="chains" value="B=1-76"/>
</dbReference>
<dbReference type="PDB" id="5V1Y">
    <property type="method" value="X-ray"/>
    <property type="resolution" value="1.42 A"/>
    <property type="chains" value="C/D=1-76"/>
</dbReference>
<dbReference type="PDB" id="5V1Z">
    <property type="method" value="X-ray"/>
    <property type="resolution" value="2.00 A"/>
    <property type="chains" value="C/D=1-76"/>
</dbReference>
<dbReference type="PDB" id="5VEY">
    <property type="method" value="NMR"/>
    <property type="chains" value="B=1-76"/>
</dbReference>
<dbReference type="PDB" id="5VF0">
    <property type="method" value="NMR"/>
    <property type="chains" value="A=1-76"/>
</dbReference>
<dbReference type="PDB" id="5VNZ">
    <property type="method" value="X-ray"/>
    <property type="resolution" value="3.41 A"/>
    <property type="chains" value="C/F=1-76"/>
</dbReference>
<dbReference type="PDB" id="5VO0">
    <property type="method" value="X-ray"/>
    <property type="resolution" value="3.90 A"/>
    <property type="chains" value="C/F=1-76"/>
</dbReference>
<dbReference type="PDB" id="5VZM">
    <property type="method" value="NMR"/>
    <property type="chains" value="A=153-228"/>
</dbReference>
<dbReference type="PDB" id="5VZW">
    <property type="method" value="X-ray"/>
    <property type="resolution" value="2.28 A"/>
    <property type="chains" value="C/D=153-228"/>
</dbReference>
<dbReference type="PDB" id="5W46">
    <property type="method" value="X-ray"/>
    <property type="resolution" value="1.18 A"/>
    <property type="chains" value="A/B=153-228"/>
</dbReference>
<dbReference type="PDB" id="5WFI">
    <property type="method" value="X-ray"/>
    <property type="resolution" value="1.85 A"/>
    <property type="chains" value="C/D=1-76"/>
</dbReference>
<dbReference type="PDB" id="5X3M">
    <property type="method" value="X-ray"/>
    <property type="resolution" value="1.82 A"/>
    <property type="chains" value="A=1-76"/>
</dbReference>
<dbReference type="PDB" id="5X3N">
    <property type="method" value="X-ray"/>
    <property type="resolution" value="1.65 A"/>
    <property type="chains" value="A=1-76"/>
</dbReference>
<dbReference type="PDB" id="5X3O">
    <property type="method" value="X-ray"/>
    <property type="resolution" value="2.19 A"/>
    <property type="chains" value="A=1-76"/>
</dbReference>
<dbReference type="PDB" id="5XBO">
    <property type="method" value="NMR"/>
    <property type="chains" value="A=1-76"/>
</dbReference>
<dbReference type="PDB" id="5XDP">
    <property type="method" value="X-ray"/>
    <property type="resolution" value="2.38 A"/>
    <property type="chains" value="A=1-76"/>
</dbReference>
<dbReference type="PDB" id="5XK4">
    <property type="method" value="NMR"/>
    <property type="chains" value="A=153-228"/>
</dbReference>
<dbReference type="PDB" id="5XK5">
    <property type="method" value="NMR"/>
    <property type="chains" value="A=153-228"/>
</dbReference>
<dbReference type="PDB" id="5XPK">
    <property type="method" value="X-ray"/>
    <property type="resolution" value="2.27 A"/>
    <property type="chains" value="A=153-228"/>
</dbReference>
<dbReference type="PDB" id="5YDR">
    <property type="method" value="X-ray"/>
    <property type="resolution" value="2.00 A"/>
    <property type="chains" value="A/D=153-225"/>
</dbReference>
<dbReference type="PDB" id="5YIJ">
    <property type="method" value="X-ray"/>
    <property type="resolution" value="3.18 A"/>
    <property type="chains" value="C/D/G=153-228"/>
</dbReference>
<dbReference type="PDB" id="5YIK">
    <property type="method" value="X-ray"/>
    <property type="resolution" value="3.10 A"/>
    <property type="chains" value="C/D/F=153-228"/>
</dbReference>
<dbReference type="PDB" id="5YMY">
    <property type="method" value="NMR"/>
    <property type="chains" value="A/B=1-76"/>
</dbReference>
<dbReference type="PDB" id="5YT6">
    <property type="method" value="X-ray"/>
    <property type="resolution" value="1.50 A"/>
    <property type="chains" value="A/C/E/G=1-76"/>
</dbReference>
<dbReference type="PDB" id="5ZBU">
    <property type="method" value="X-ray"/>
    <property type="resolution" value="3.20 A"/>
    <property type="chains" value="E=1-76"/>
</dbReference>
<dbReference type="PDB" id="5ZD0">
    <property type="method" value="NMR"/>
    <property type="chains" value="A=153-228"/>
</dbReference>
<dbReference type="PDB" id="6ASR">
    <property type="method" value="X-ray"/>
    <property type="resolution" value="2.36 A"/>
    <property type="chains" value="A/C=153-228"/>
</dbReference>
<dbReference type="PDB" id="6BVA">
    <property type="method" value="X-ray"/>
    <property type="resolution" value="2.66 A"/>
    <property type="chains" value="A/B=76-152"/>
</dbReference>
<dbReference type="PDB" id="6BYH">
    <property type="method" value="X-ray"/>
    <property type="resolution" value="2.61 A"/>
    <property type="chains" value="C/D/H=76-152"/>
</dbReference>
<dbReference type="PDB" id="6C16">
    <property type="method" value="X-ray"/>
    <property type="resolution" value="3.27 A"/>
    <property type="chains" value="D/H=77-152"/>
</dbReference>
<dbReference type="PDB" id="6CP2">
    <property type="method" value="X-ray"/>
    <property type="resolution" value="2.90 A"/>
    <property type="chains" value="C=75-152"/>
</dbReference>
<dbReference type="PDB" id="6DGF">
    <property type="method" value="X-ray"/>
    <property type="resolution" value="2.34 A"/>
    <property type="chains" value="B=1-74"/>
</dbReference>
<dbReference type="PDB" id="6EI1">
    <property type="method" value="X-ray"/>
    <property type="resolution" value="1.73 A"/>
    <property type="chains" value="B=153-227"/>
</dbReference>
<dbReference type="PDB" id="6FDK">
    <property type="method" value="X-ray"/>
    <property type="resolution" value="1.60 A"/>
    <property type="chains" value="B=1-76"/>
</dbReference>
<dbReference type="PDB" id="6FGE">
    <property type="method" value="X-ray"/>
    <property type="resolution" value="1.74 A"/>
    <property type="chains" value="C=153-227"/>
</dbReference>
<dbReference type="PDB" id="6FTX">
    <property type="method" value="EM"/>
    <property type="resolution" value="4.50 A"/>
    <property type="chains" value="N/O=1-76"/>
</dbReference>
<dbReference type="PDB" id="6FX4">
    <property type="method" value="X-ray"/>
    <property type="resolution" value="2.50 A"/>
    <property type="chains" value="B/D=1-76"/>
</dbReference>
<dbReference type="PDB" id="6FYH">
    <property type="method" value="X-ray"/>
    <property type="resolution" value="2.91 A"/>
    <property type="chains" value="B=1-76"/>
</dbReference>
<dbReference type="PDB" id="6GLC">
    <property type="method" value="X-ray"/>
    <property type="resolution" value="1.80 A"/>
    <property type="chains" value="B=153-228"/>
</dbReference>
<dbReference type="PDB" id="6GZS">
    <property type="method" value="X-ray"/>
    <property type="resolution" value="1.90 A"/>
    <property type="chains" value="B=1-75"/>
</dbReference>
<dbReference type="PDB" id="6H4H">
    <property type="method" value="X-ray"/>
    <property type="resolution" value="3.50 A"/>
    <property type="chains" value="C/D=1-75"/>
</dbReference>
<dbReference type="PDB" id="6HEI">
    <property type="method" value="X-ray"/>
    <property type="resolution" value="1.64 A"/>
    <property type="chains" value="B=1-75"/>
</dbReference>
<dbReference type="PDB" id="6HEK">
    <property type="method" value="X-ray"/>
    <property type="resolution" value="3.03 A"/>
    <property type="chains" value="B/D=1-76"/>
</dbReference>
<dbReference type="PDB" id="6IF1">
    <property type="method" value="X-ray"/>
    <property type="resolution" value="2.47 A"/>
    <property type="chains" value="C/D=1-76"/>
</dbReference>
<dbReference type="PDB" id="6ISU">
    <property type="method" value="X-ray"/>
    <property type="resolution" value="1.87 A"/>
    <property type="chains" value="B/C=1-76"/>
</dbReference>
<dbReference type="PDB" id="6JB6">
    <property type="method" value="X-ray"/>
    <property type="resolution" value="2.70 A"/>
    <property type="chains" value="B=1-76"/>
</dbReference>
<dbReference type="PDB" id="6JB7">
    <property type="method" value="X-ray"/>
    <property type="resolution" value="2.10 A"/>
    <property type="chains" value="B=1-76"/>
</dbReference>
<dbReference type="PDB" id="6JMA">
    <property type="method" value="EM"/>
    <property type="resolution" value="6.80 A"/>
    <property type="chains" value="Y=1-76"/>
</dbReference>
<dbReference type="PDB" id="6K4I">
    <property type="method" value="NMR"/>
    <property type="chains" value="A=1-76"/>
</dbReference>
<dbReference type="PDB" id="6K9P">
    <property type="method" value="X-ray"/>
    <property type="resolution" value="2.05 A"/>
    <property type="chains" value="G=1-76"/>
</dbReference>
<dbReference type="PDB" id="6KOW">
    <property type="method" value="NMR"/>
    <property type="chains" value="A=1-76"/>
</dbReference>
<dbReference type="PDB" id="6KOX">
    <property type="method" value="NMR"/>
    <property type="chains" value="A=1-76"/>
</dbReference>
<dbReference type="PDB" id="6LP2">
    <property type="method" value="X-ray"/>
    <property type="resolution" value="2.48 A"/>
    <property type="chains" value="C=1-75"/>
</dbReference>
<dbReference type="PDB" id="6MSB">
    <property type="method" value="EM"/>
    <property type="resolution" value="3.00 A"/>
    <property type="chains" value="u/w=1-76"/>
</dbReference>
<dbReference type="PDB" id="6MSD">
    <property type="method" value="EM"/>
    <property type="resolution" value="3.20 A"/>
    <property type="chains" value="u/w=1-76"/>
</dbReference>
<dbReference type="PDB" id="6MSE">
    <property type="method" value="EM"/>
    <property type="resolution" value="3.30 A"/>
    <property type="chains" value="u=1-76"/>
</dbReference>
<dbReference type="PDB" id="6MSG">
    <property type="method" value="EM"/>
    <property type="resolution" value="3.50 A"/>
    <property type="chains" value="u=1-76"/>
</dbReference>
<dbReference type="PDB" id="6N13">
    <property type="method" value="NMR"/>
    <property type="chains" value="D=1-76"/>
</dbReference>
<dbReference type="PDB" id="6NJ9">
    <property type="method" value="EM"/>
    <property type="resolution" value="2.96 A"/>
    <property type="chains" value="L/N=1-76"/>
</dbReference>
<dbReference type="PDB" id="6NJG">
    <property type="method" value="X-ray"/>
    <property type="resolution" value="2.35 A"/>
    <property type="chains" value="A=1-78"/>
</dbReference>
<dbReference type="PDB" id="6O96">
    <property type="method" value="EM"/>
    <property type="resolution" value="3.50 A"/>
    <property type="chains" value="L=1-76"/>
</dbReference>
<dbReference type="PDB" id="6OAM">
    <property type="method" value="X-ray"/>
    <property type="resolution" value="2.50 A"/>
    <property type="chains" value="C/D=1-75"/>
</dbReference>
<dbReference type="PDB" id="6PGV">
    <property type="method" value="X-ray"/>
    <property type="resolution" value="2.30 A"/>
    <property type="chains" value="B=1-75"/>
</dbReference>
<dbReference type="PDB" id="6PZV">
    <property type="method" value="X-ray"/>
    <property type="resolution" value="3.01 A"/>
    <property type="chains" value="A/B/E/F=1-76"/>
</dbReference>
<dbReference type="PDB" id="6QF8">
    <property type="method" value="NMR"/>
    <property type="chains" value="A=1-76"/>
</dbReference>
<dbReference type="PDB" id="6QK9">
    <property type="method" value="X-ray"/>
    <property type="resolution" value="2.23 A"/>
    <property type="chains" value="A/B/C/D/E/F/G/H/I/J/K/L=1-74"/>
</dbReference>
<dbReference type="PDB" id="6QML">
    <property type="method" value="X-ray"/>
    <property type="resolution" value="2.10 A"/>
    <property type="chains" value="B/E=1-76"/>
</dbReference>
<dbReference type="PDB" id="6TBM">
    <property type="method" value="EM"/>
    <property type="resolution" value="20.00 A"/>
    <property type="chains" value="R=153-227"/>
</dbReference>
<dbReference type="PDB" id="6UH5">
    <property type="method" value="EM"/>
    <property type="resolution" value="3.50 A"/>
    <property type="chains" value="Q=1-76"/>
</dbReference>
<dbReference type="PDB" id="6XAA">
    <property type="method" value="X-ray"/>
    <property type="resolution" value="2.70 A"/>
    <property type="chains" value="B=1-76"/>
</dbReference>
<dbReference type="PDB" id="6XQC">
    <property type="method" value="NMR"/>
    <property type="chains" value="A=1-76"/>
</dbReference>
<dbReference type="PDB" id="6XZ1">
    <property type="method" value="X-ray"/>
    <property type="resolution" value="2.30 A"/>
    <property type="chains" value="C/D=1-75"/>
</dbReference>
<dbReference type="PDB" id="7AY2">
    <property type="method" value="X-ray"/>
    <property type="resolution" value="3.20 A"/>
    <property type="chains" value="C/F=1-75"/>
</dbReference>
<dbReference type="PDB" id="7BBD">
    <property type="method" value="X-ray"/>
    <property type="resolution" value="2.20 A"/>
    <property type="chains" value="B=1-74"/>
</dbReference>
<dbReference type="PDB" id="7BU0">
    <property type="method" value="X-ray"/>
    <property type="resolution" value="2.43 A"/>
    <property type="chains" value="C/D=1-75"/>
</dbReference>
<dbReference type="PDB" id="7CAP">
    <property type="method" value="X-ray"/>
    <property type="resolution" value="1.33 A"/>
    <property type="chains" value="A/B/C=1-76"/>
</dbReference>
<dbReference type="PDB" id="7DNI">
    <property type="method" value="EM"/>
    <property type="resolution" value="3.20 A"/>
    <property type="chains" value="E/F/G/H/I/J/K/L=1-76"/>
</dbReference>
<dbReference type="PDB" id="7DNJ">
    <property type="method" value="EM"/>
    <property type="resolution" value="3.30 A"/>
    <property type="chains" value="E/F/G/H/I/J/K/L=1-76"/>
</dbReference>
<dbReference type="PDB" id="7E8I">
    <property type="method" value="EM"/>
    <property type="resolution" value="3.10 A"/>
    <property type="chains" value="L=153-228"/>
</dbReference>
<dbReference type="PDB" id="7F7X">
    <property type="method" value="NMR"/>
    <property type="chains" value="A=1-76"/>
</dbReference>
<dbReference type="PDB" id="7JMS">
    <property type="method" value="X-ray"/>
    <property type="resolution" value="2.78 A"/>
    <property type="chains" value="B/D/F/H=1-75"/>
</dbReference>
<dbReference type="PDB" id="7LYC">
    <property type="method" value="EM"/>
    <property type="resolution" value="2.94 A"/>
    <property type="chains" value="K=1-76"/>
</dbReference>
<dbReference type="PDB" id="7M2K">
    <property type="method" value="X-ray"/>
    <property type="resolution" value="2.47 A"/>
    <property type="chains" value="B/D/F/H=1-76"/>
</dbReference>
<dbReference type="PDB" id="7MC9">
    <property type="method" value="X-ray"/>
    <property type="resolution" value="3.10 A"/>
    <property type="chains" value="B/D/F/H/J/L/N/P=1-76"/>
</dbReference>
<dbReference type="PDB" id="7MEY">
    <property type="method" value="EM"/>
    <property type="resolution" value="3.67 A"/>
    <property type="chains" value="C/D=1-75"/>
</dbReference>
<dbReference type="PDB" id="7MYF">
    <property type="method" value="X-ray"/>
    <property type="resolution" value="3.00 A"/>
    <property type="chains" value="B=1-75"/>
</dbReference>
<dbReference type="PDB" id="7MYH">
    <property type="method" value="X-ray"/>
    <property type="resolution" value="2.39 A"/>
    <property type="chains" value="B=1-75"/>
</dbReference>
<dbReference type="PDB" id="7NBB">
    <property type="method" value="X-ray"/>
    <property type="resolution" value="1.55 A"/>
    <property type="chains" value="A/E=153-224, B/C/F/G=153-228"/>
</dbReference>
<dbReference type="PDB" id="7NPO">
    <property type="method" value="X-ray"/>
    <property type="resolution" value="2.19 A"/>
    <property type="chains" value="A=153-224, B/C=153-228"/>
</dbReference>
<dbReference type="PDB" id="7OJE">
    <property type="method" value="X-ray"/>
    <property type="resolution" value="2.05 A"/>
    <property type="chains" value="B/D=1-76"/>
</dbReference>
<dbReference type="PDB" id="7OJX">
    <property type="method" value="X-ray"/>
    <property type="resolution" value="2.40 A"/>
    <property type="chains" value="C/D/E=1-76"/>
</dbReference>
<dbReference type="PDB" id="7QO4">
    <property type="method" value="EM"/>
    <property type="resolution" value="7.00 A"/>
    <property type="chains" value="9=153-228"/>
</dbReference>
<dbReference type="PDB" id="7QO5">
    <property type="method" value="EM"/>
    <property type="resolution" value="6.00 A"/>
    <property type="chains" value="9=153-228"/>
</dbReference>
<dbReference type="PDB" id="7RBR">
    <property type="method" value="X-ray"/>
    <property type="resolution" value="1.88 A"/>
    <property type="chains" value="B=1-77"/>
</dbReference>
<dbReference type="PDB" id="7RMA">
    <property type="method" value="X-ray"/>
    <property type="resolution" value="2.00 A"/>
    <property type="chains" value="A=1-76"/>
</dbReference>
<dbReference type="PDB" id="7UD5">
    <property type="method" value="EM"/>
    <property type="resolution" value="4.25 A"/>
    <property type="chains" value="O=153-228"/>
</dbReference>
<dbReference type="PDB" id="7US1">
    <property type="method" value="X-ray"/>
    <property type="resolution" value="2.48 A"/>
    <property type="chains" value="B/C=153-226"/>
</dbReference>
<dbReference type="PDB" id="7UV5">
    <property type="method" value="X-ray"/>
    <property type="resolution" value="1.45 A"/>
    <property type="chains" value="C=1-76"/>
</dbReference>
<dbReference type="PDB" id="7W38">
    <property type="method" value="EM"/>
    <property type="resolution" value="3.10 A"/>
    <property type="chains" value="u=1-76"/>
</dbReference>
<dbReference type="PDB" id="7W39">
    <property type="method" value="EM"/>
    <property type="resolution" value="3.20 A"/>
    <property type="chains" value="u=1-76"/>
</dbReference>
<dbReference type="PDB" id="7W3A">
    <property type="method" value="EM"/>
    <property type="resolution" value="3.50 A"/>
    <property type="chains" value="y=1-76"/>
</dbReference>
<dbReference type="PDB" id="7W3B">
    <property type="method" value="EM"/>
    <property type="resolution" value="3.60 A"/>
    <property type="chains" value="y=1-76"/>
</dbReference>
<dbReference type="PDB" id="7W3C">
    <property type="method" value="EM"/>
    <property type="resolution" value="3.40 A"/>
    <property type="chains" value="y=1-76"/>
</dbReference>
<dbReference type="PDB" id="7W3F">
    <property type="method" value="EM"/>
    <property type="resolution" value="3.30 A"/>
    <property type="chains" value="y=1-76"/>
</dbReference>
<dbReference type="PDB" id="7W3G">
    <property type="method" value="EM"/>
    <property type="resolution" value="3.20 A"/>
    <property type="chains" value="y=1-76"/>
</dbReference>
<dbReference type="PDB" id="7W3H">
    <property type="method" value="EM"/>
    <property type="resolution" value="3.20 A"/>
    <property type="chains" value="y=1-76"/>
</dbReference>
<dbReference type="PDB" id="7W3I">
    <property type="method" value="EM"/>
    <property type="resolution" value="3.50 A"/>
    <property type="chains" value="y=1-76"/>
</dbReference>
<dbReference type="PDB" id="7W3J">
    <property type="method" value="EM"/>
    <property type="resolution" value="3.50 A"/>
    <property type="chains" value="y=1-76"/>
</dbReference>
<dbReference type="PDB" id="7W3K">
    <property type="method" value="EM"/>
    <property type="resolution" value="3.60 A"/>
    <property type="chains" value="y=1-76"/>
</dbReference>
<dbReference type="PDB" id="7W3M">
    <property type="method" value="EM"/>
    <property type="resolution" value="3.50 A"/>
    <property type="chains" value="y=1-76"/>
</dbReference>
<dbReference type="PDB" id="7W3U">
    <property type="method" value="X-ray"/>
    <property type="resolution" value="3.13 A"/>
    <property type="chains" value="D/E/F=153-227"/>
</dbReference>
<dbReference type="PDB" id="7W54">
    <property type="method" value="X-ray"/>
    <property type="resolution" value="2.64 A"/>
    <property type="chains" value="C/D/E/F=153-227"/>
</dbReference>
<dbReference type="PDB" id="7XCR">
    <property type="method" value="EM"/>
    <property type="resolution" value="2.57 A"/>
    <property type="chains" value="L=1-76"/>
</dbReference>
<dbReference type="PDB" id="7XCT">
    <property type="method" value="EM"/>
    <property type="resolution" value="2.72 A"/>
    <property type="chains" value="L/N=1-76"/>
</dbReference>
<dbReference type="PDB" id="7YQK">
    <property type="method" value="EM"/>
    <property type="resolution" value="3.38 A"/>
    <property type="chains" value="O=153-227"/>
</dbReference>
<dbReference type="PDB" id="8A67">
    <property type="method" value="X-ray"/>
    <property type="resolution" value="1.86 A"/>
    <property type="chains" value="A/E=153-224, B/C/F/G=153-228"/>
</dbReference>
<dbReference type="PDB" id="8BS9">
    <property type="method" value="X-ray"/>
    <property type="resolution" value="1.90 A"/>
    <property type="chains" value="B/D=153-227"/>
</dbReference>
<dbReference type="PDB" id="8C07">
    <property type="method" value="EM"/>
    <property type="resolution" value="3.30 A"/>
    <property type="chains" value="I/K=153-228"/>
</dbReference>
<dbReference type="PDB" id="8C61">
    <property type="method" value="X-ray"/>
    <property type="resolution" value="2.50 A"/>
    <property type="chains" value="B/E/H/K=153-227, C/F/I/L=153-228"/>
</dbReference>
<dbReference type="PDB" id="8CMR">
    <property type="method" value="X-ray"/>
    <property type="resolution" value="2.24 A"/>
    <property type="chains" value="B/D=77-228"/>
</dbReference>
<dbReference type="PDB" id="8DMQ">
    <property type="method" value="X-ray"/>
    <property type="resolution" value="2.19 A"/>
    <property type="chains" value="C/D=153-227"/>
</dbReference>
<dbReference type="PDB" id="8DMS">
    <property type="method" value="X-ray"/>
    <property type="resolution" value="2.15 A"/>
    <property type="chains" value="C/D=153-227"/>
</dbReference>
<dbReference type="PDB" id="8DU4">
    <property type="method" value="EM"/>
    <property type="resolution" value="3.55 A"/>
    <property type="chains" value="O=153-228"/>
</dbReference>
<dbReference type="PDB" id="8EFW">
    <property type="method" value="X-ray"/>
    <property type="resolution" value="2.81 A"/>
    <property type="chains" value="C=153-228"/>
</dbReference>
<dbReference type="PDB" id="8EFX">
    <property type="method" value="X-ray"/>
    <property type="resolution" value="1.85 A"/>
    <property type="chains" value="B=153-228"/>
</dbReference>
<dbReference type="PDB" id="8EHO">
    <property type="method" value="X-ray"/>
    <property type="resolution" value="2.85 A"/>
    <property type="chains" value="B/D/F=153-227"/>
</dbReference>
<dbReference type="PDB" id="8G6G">
    <property type="method" value="EM"/>
    <property type="resolution" value="2.93 A"/>
    <property type="chains" value="K=153-228"/>
</dbReference>
<dbReference type="PDB" id="8G6H">
    <property type="method" value="EM"/>
    <property type="resolution" value="3.06 A"/>
    <property type="chains" value="K=153-228"/>
</dbReference>
<dbReference type="PDB" id="8G6Q">
    <property type="method" value="EM"/>
    <property type="resolution" value="3.41 A"/>
    <property type="chains" value="K=153-228"/>
</dbReference>
<dbReference type="PDB" id="8G6S">
    <property type="method" value="EM"/>
    <property type="resolution" value="3.47 A"/>
    <property type="chains" value="K=153-228"/>
</dbReference>
<dbReference type="PDB" id="8GRM">
    <property type="method" value="EM"/>
    <property type="resolution" value="3.05 A"/>
    <property type="chains" value="O=153-228"/>
</dbReference>
<dbReference type="PDB" id="8H1T">
    <property type="method" value="EM"/>
    <property type="resolution" value="3.00 A"/>
    <property type="chains" value="M=153-228"/>
</dbReference>
<dbReference type="PDB" id="8HQY">
    <property type="method" value="EM"/>
    <property type="resolution" value="3.05 A"/>
    <property type="chains" value="U=153-226"/>
</dbReference>
<dbReference type="PDB" id="8IC9">
    <property type="method" value="X-ray"/>
    <property type="resolution" value="1.25 A"/>
    <property type="chains" value="A/B/C/D=153-228"/>
</dbReference>
<dbReference type="PDB" id="8ITP">
    <property type="method" value="X-ray"/>
    <property type="resolution" value="3.00 A"/>
    <property type="chains" value="A/C=153-228"/>
</dbReference>
<dbReference type="PDB" id="8J1P">
    <property type="method" value="EM"/>
    <property type="resolution" value="3.31 A"/>
    <property type="chains" value="C/D/E=153-228"/>
</dbReference>
<dbReference type="PDB" id="8K0G">
    <property type="method" value="EM"/>
    <property type="resolution" value="3.80 A"/>
    <property type="chains" value="u/v/w/x=153-228"/>
</dbReference>
<dbReference type="PDB" id="8OYP">
    <property type="method" value="X-ray"/>
    <property type="resolution" value="2.44 A"/>
    <property type="chains" value="C/D=77-152"/>
</dbReference>
<dbReference type="PDB" id="8PP6">
    <property type="method" value="EM"/>
    <property type="resolution" value="3.18 A"/>
    <property type="chains" value="M=153-225"/>
</dbReference>
<dbReference type="PDB" id="8Q00">
    <property type="method" value="X-ray"/>
    <property type="resolution" value="1.62 A"/>
    <property type="chains" value="B/D=153-228"/>
</dbReference>
<dbReference type="PDB" id="8RQI">
    <property type="method" value="X-ray"/>
    <property type="resolution" value="1.94 A"/>
    <property type="chains" value="B=153-227"/>
</dbReference>
<dbReference type="PDB" id="8SN3">
    <property type="method" value="EM"/>
    <property type="resolution" value="3.80 A"/>
    <property type="chains" value="M=170-228"/>
</dbReference>
<dbReference type="PDB" id="8SN4">
    <property type="method" value="EM"/>
    <property type="resolution" value="3.70 A"/>
    <property type="chains" value="M=170-228"/>
</dbReference>
<dbReference type="PDB" id="8SN5">
    <property type="method" value="EM"/>
    <property type="resolution" value="3.90 A"/>
    <property type="chains" value="M=170-228"/>
</dbReference>
<dbReference type="PDB" id="8SN6">
    <property type="method" value="EM"/>
    <property type="resolution" value="3.70 A"/>
    <property type="chains" value="M=170-228"/>
</dbReference>
<dbReference type="PDB" id="8SN7">
    <property type="method" value="EM"/>
    <property type="resolution" value="3.70 A"/>
    <property type="chains" value="M=170-228"/>
</dbReference>
<dbReference type="PDB" id="8SN8">
    <property type="method" value="EM"/>
    <property type="resolution" value="3.70 A"/>
    <property type="chains" value="M=170-228"/>
</dbReference>
<dbReference type="PDB" id="8SN9">
    <property type="method" value="EM"/>
    <property type="resolution" value="3.90 A"/>
    <property type="chains" value="M=170-228"/>
</dbReference>
<dbReference type="PDB" id="8SNA">
    <property type="method" value="EM"/>
    <property type="resolution" value="4.00 A"/>
    <property type="chains" value="M=170-228"/>
</dbReference>
<dbReference type="PDB" id="8T2D">
    <property type="method" value="X-ray"/>
    <property type="resolution" value="1.75 A"/>
    <property type="chains" value="B=153-226"/>
</dbReference>
<dbReference type="PDB" id="8TXV">
    <property type="method" value="EM"/>
    <property type="resolution" value="3.80 A"/>
    <property type="chains" value="M=170-228"/>
</dbReference>
<dbReference type="PDB" id="8TXW">
    <property type="method" value="EM"/>
    <property type="resolution" value="3.60 A"/>
    <property type="chains" value="M=170-228"/>
</dbReference>
<dbReference type="PDB" id="8TXX">
    <property type="method" value="EM"/>
    <property type="resolution" value="3.70 A"/>
    <property type="chains" value="M=170-228"/>
</dbReference>
<dbReference type="PDB" id="8V25">
    <property type="method" value="EM"/>
    <property type="resolution" value="3.32 A"/>
    <property type="chains" value="K=153-228"/>
</dbReference>
<dbReference type="PDB" id="8V26">
    <property type="method" value="EM"/>
    <property type="resolution" value="3.33 A"/>
    <property type="chains" value="K=153-228"/>
</dbReference>
<dbReference type="PDB" id="8V27">
    <property type="method" value="EM"/>
    <property type="resolution" value="3.34 A"/>
    <property type="chains" value="K=153-228"/>
</dbReference>
<dbReference type="PDB" id="8V28">
    <property type="method" value="EM"/>
    <property type="resolution" value="3.36 A"/>
    <property type="chains" value="K=153-228"/>
</dbReference>
<dbReference type="PDB" id="8W31">
    <property type="method" value="X-ray"/>
    <property type="resolution" value="2.50 A"/>
    <property type="chains" value="B/C=153-227"/>
</dbReference>
<dbReference type="PDB" id="8WG5">
    <property type="method" value="EM"/>
    <property type="resolution" value="3.05 A"/>
    <property type="chains" value="U=153-227"/>
</dbReference>
<dbReference type="PDB" id="8XEP">
    <property type="method" value="X-ray"/>
    <property type="resolution" value="2.95 A"/>
    <property type="chains" value="B/C=153-228"/>
</dbReference>
<dbReference type="PDB" id="9AVT">
    <property type="method" value="X-ray"/>
    <property type="resolution" value="1.50 A"/>
    <property type="chains" value="A/B=153-228"/>
</dbReference>
<dbReference type="PDB" id="9AVW">
    <property type="method" value="X-ray"/>
    <property type="resolution" value="1.75 A"/>
    <property type="chains" value="A/B=77-228"/>
</dbReference>
<dbReference type="PDB" id="9AZJ">
    <property type="method" value="X-ray"/>
    <property type="resolution" value="3.32 A"/>
    <property type="chains" value="F/S/Z=153-228"/>
</dbReference>
<dbReference type="PDB" id="9B0Z">
    <property type="method" value="X-ray"/>
    <property type="resolution" value="2.41 A"/>
    <property type="chains" value="C/D/G=77-228"/>
</dbReference>
<dbReference type="PDB" id="9B12">
    <property type="method" value="X-ray"/>
    <property type="resolution" value="1.81 A"/>
    <property type="chains" value="A/B=77-228"/>
</dbReference>
<dbReference type="PDB" id="9C5E">
    <property type="method" value="NMR"/>
    <property type="chains" value="B=153-227"/>
</dbReference>
<dbReference type="PDB" id="9EMK">
    <property type="method" value="X-ray"/>
    <property type="resolution" value="2.17 A"/>
    <property type="chains" value="B/D/F=153-228"/>
</dbReference>
<dbReference type="PDB" id="9HNW">
    <property type="method" value="EM"/>
    <property type="resolution" value="3.04 A"/>
    <property type="chains" value="C=153-227, D=153-228"/>
</dbReference>
<dbReference type="PDBsum" id="2KHW"/>
<dbReference type="PDBsum" id="2MBB"/>
<dbReference type="PDBsum" id="2MRO"/>
<dbReference type="PDBsum" id="2MSG"/>
<dbReference type="PDBsum" id="2N13"/>
<dbReference type="PDBsum" id="4UEL"/>
<dbReference type="PDBsum" id="4UF6"/>
<dbReference type="PDBsum" id="4WHV"/>
<dbReference type="PDBsum" id="4WLR"/>
<dbReference type="PDBsum" id="4WUR"/>
<dbReference type="PDBsum" id="4XOF"/>
<dbReference type="PDBsum" id="4ZFR"/>
<dbReference type="PDBsum" id="4ZFT"/>
<dbReference type="PDBsum" id="4ZPZ"/>
<dbReference type="PDBsum" id="4ZUX"/>
<dbReference type="PDBsum" id="5BNB"/>
<dbReference type="PDBsum" id="5CAW"/>
<dbReference type="PDBsum" id="5CRA"/>
<dbReference type="PDBsum" id="5CVM"/>
<dbReference type="PDBsum" id="5CVN"/>
<dbReference type="PDBsum" id="5CVO"/>
<dbReference type="PDBsum" id="5D0K"/>
<dbReference type="PDBsum" id="5D0M"/>
<dbReference type="PDBsum" id="5DFL"/>
<dbReference type="PDBsum" id="5DK8"/>
<dbReference type="PDBsum" id="5E6J"/>
<dbReference type="PDBsum" id="5EDV"/>
<dbReference type="PDBsum" id="5EMZ"/>
<dbReference type="PDBsum" id="5EYA"/>
<dbReference type="PDBsum" id="5GJQ"/>
<dbReference type="PDBsum" id="5GO7"/>
<dbReference type="PDBsum" id="5GO8"/>
<dbReference type="PDBsum" id="5GOB"/>
<dbReference type="PDBsum" id="5GOC"/>
<dbReference type="PDBsum" id="5GOD"/>
<dbReference type="PDBsum" id="5GOG"/>
<dbReference type="PDBsum" id="5GOH"/>
<dbReference type="PDBsum" id="5GOI"/>
<dbReference type="PDBsum" id="5GOJ"/>
<dbReference type="PDBsum" id="5GOK"/>
<dbReference type="PDBsum" id="5H7S"/>
<dbReference type="PDBsum" id="5IBK"/>
<dbReference type="PDBsum" id="5IFR"/>
<dbReference type="PDBsum" id="5JBY"/>
<dbReference type="PDBsum" id="5JG6"/>
<dbReference type="PDBsum" id="5JP3"/>
<dbReference type="PDBsum" id="5JTJ"/>
<dbReference type="PDBsum" id="5JTV"/>
<dbReference type="PDBsum" id="5K9P"/>
<dbReference type="PDBsum" id="5KGF"/>
<dbReference type="PDBsum" id="5KHY"/>
<dbReference type="PDBsum" id="5KYC"/>
<dbReference type="PDBsum" id="5KYD"/>
<dbReference type="PDBsum" id="5KYE"/>
<dbReference type="PDBsum" id="5KYF"/>
<dbReference type="PDBsum" id="5L8H"/>
<dbReference type="PDBsum" id="5L8W"/>
<dbReference type="PDBsum" id="5L9T"/>
<dbReference type="PDBsum" id="5LN1"/>
<dbReference type="PDBsum" id="5LRV"/>
<dbReference type="PDBsum" id="5LRW"/>
<dbReference type="PDBsum" id="5LRX"/>
<dbReference type="PDBsum" id="5M93"/>
<dbReference type="PDBsum" id="5MNJ"/>
<dbReference type="PDBsum" id="5N2W"/>
<dbReference type="PDBsum" id="5N38"/>
<dbReference type="PDBsum" id="5NL5"/>
<dbReference type="PDBsum" id="5NLJ"/>
<dbReference type="PDBsum" id="5NVG"/>
<dbReference type="PDBsum" id="5O44"/>
<dbReference type="PDBsum" id="5O6T"/>
<dbReference type="PDBsum" id="5OHK"/>
<dbReference type="PDBsum" id="5OHL"/>
<dbReference type="PDBsum" id="5OHN"/>
<dbReference type="PDBsum" id="5OHP"/>
<dbReference type="PDBsum" id="5TOF"/>
<dbReference type="PDBsum" id="5TOG"/>
<dbReference type="PDBsum" id="5TUT"/>
<dbReference type="PDBsum" id="5TXK"/>
<dbReference type="PDBsum" id="5UJL"/>
<dbReference type="PDBsum" id="5UJN"/>
<dbReference type="PDBsum" id="5ULF"/>
<dbReference type="PDBsum" id="5ULH"/>
<dbReference type="PDBsum" id="5ULK"/>
<dbReference type="PDBsum" id="5V1Y"/>
<dbReference type="PDBsum" id="5V1Z"/>
<dbReference type="PDBsum" id="5VEY"/>
<dbReference type="PDBsum" id="5VF0"/>
<dbReference type="PDBsum" id="5VNZ"/>
<dbReference type="PDBsum" id="5VO0"/>
<dbReference type="PDBsum" id="5VZM"/>
<dbReference type="PDBsum" id="5VZW"/>
<dbReference type="PDBsum" id="5W46"/>
<dbReference type="PDBsum" id="5WFI"/>
<dbReference type="PDBsum" id="5X3M"/>
<dbReference type="PDBsum" id="5X3N"/>
<dbReference type="PDBsum" id="5X3O"/>
<dbReference type="PDBsum" id="5XBO"/>
<dbReference type="PDBsum" id="5XDP"/>
<dbReference type="PDBsum" id="5XK4"/>
<dbReference type="PDBsum" id="5XK5"/>
<dbReference type="PDBsum" id="5XPK"/>
<dbReference type="PDBsum" id="5YDR"/>
<dbReference type="PDBsum" id="5YIJ"/>
<dbReference type="PDBsum" id="5YIK"/>
<dbReference type="PDBsum" id="5YMY"/>
<dbReference type="PDBsum" id="5YT6"/>
<dbReference type="PDBsum" id="5ZBU"/>
<dbReference type="PDBsum" id="5ZD0"/>
<dbReference type="PDBsum" id="6ASR"/>
<dbReference type="PDBsum" id="6BVA"/>
<dbReference type="PDBsum" id="6BYH"/>
<dbReference type="PDBsum" id="6C16"/>
<dbReference type="PDBsum" id="6CP2"/>
<dbReference type="PDBsum" id="6DGF"/>
<dbReference type="PDBsum" id="6EI1"/>
<dbReference type="PDBsum" id="6FDK"/>
<dbReference type="PDBsum" id="6FGE"/>
<dbReference type="PDBsum" id="6FTX"/>
<dbReference type="PDBsum" id="6FX4"/>
<dbReference type="PDBsum" id="6FYH"/>
<dbReference type="PDBsum" id="6GLC"/>
<dbReference type="PDBsum" id="6GZS"/>
<dbReference type="PDBsum" id="6H4H"/>
<dbReference type="PDBsum" id="6HEI"/>
<dbReference type="PDBsum" id="6HEK"/>
<dbReference type="PDBsum" id="6IF1"/>
<dbReference type="PDBsum" id="6ISU"/>
<dbReference type="PDBsum" id="6JB6"/>
<dbReference type="PDBsum" id="6JB7"/>
<dbReference type="PDBsum" id="6JMA"/>
<dbReference type="PDBsum" id="6K4I"/>
<dbReference type="PDBsum" id="6K9P"/>
<dbReference type="PDBsum" id="6KOW"/>
<dbReference type="PDBsum" id="6KOX"/>
<dbReference type="PDBsum" id="6LP2"/>
<dbReference type="PDBsum" id="6MSB"/>
<dbReference type="PDBsum" id="6MSD"/>
<dbReference type="PDBsum" id="6MSE"/>
<dbReference type="PDBsum" id="6MSG"/>
<dbReference type="PDBsum" id="6N13"/>
<dbReference type="PDBsum" id="6NJ9"/>
<dbReference type="PDBsum" id="6NJG"/>
<dbReference type="PDBsum" id="6O96"/>
<dbReference type="PDBsum" id="6OAM"/>
<dbReference type="PDBsum" id="6PGV"/>
<dbReference type="PDBsum" id="6PZV"/>
<dbReference type="PDBsum" id="6QF8"/>
<dbReference type="PDBsum" id="6QK9"/>
<dbReference type="PDBsum" id="6QML"/>
<dbReference type="PDBsum" id="6TBM"/>
<dbReference type="PDBsum" id="6UH5"/>
<dbReference type="PDBsum" id="6XAA"/>
<dbReference type="PDBsum" id="6XQC"/>
<dbReference type="PDBsum" id="6XZ1"/>
<dbReference type="PDBsum" id="7AY2"/>
<dbReference type="PDBsum" id="7BBD"/>
<dbReference type="PDBsum" id="7BU0"/>
<dbReference type="PDBsum" id="7CAP"/>
<dbReference type="PDBsum" id="7DNI"/>
<dbReference type="PDBsum" id="7DNJ"/>
<dbReference type="PDBsum" id="7E8I"/>
<dbReference type="PDBsum" id="7F7X"/>
<dbReference type="PDBsum" id="7JMS"/>
<dbReference type="PDBsum" id="7LYC"/>
<dbReference type="PDBsum" id="7M2K"/>
<dbReference type="PDBsum" id="7MC9"/>
<dbReference type="PDBsum" id="7MEY"/>
<dbReference type="PDBsum" id="7MYF"/>
<dbReference type="PDBsum" id="7MYH"/>
<dbReference type="PDBsum" id="7NBB"/>
<dbReference type="PDBsum" id="7NPO"/>
<dbReference type="PDBsum" id="7OJE"/>
<dbReference type="PDBsum" id="7OJX"/>
<dbReference type="PDBsum" id="7QO4"/>
<dbReference type="PDBsum" id="7QO5"/>
<dbReference type="PDBsum" id="7RBR"/>
<dbReference type="PDBsum" id="7RMA"/>
<dbReference type="PDBsum" id="7UD5"/>
<dbReference type="PDBsum" id="7US1"/>
<dbReference type="PDBsum" id="7UV5"/>
<dbReference type="PDBsum" id="7W38"/>
<dbReference type="PDBsum" id="7W39"/>
<dbReference type="PDBsum" id="7W3A"/>
<dbReference type="PDBsum" id="7W3B"/>
<dbReference type="PDBsum" id="7W3C"/>
<dbReference type="PDBsum" id="7W3F"/>
<dbReference type="PDBsum" id="7W3G"/>
<dbReference type="PDBsum" id="7W3H"/>
<dbReference type="PDBsum" id="7W3I"/>
<dbReference type="PDBsum" id="7W3J"/>
<dbReference type="PDBsum" id="7W3K"/>
<dbReference type="PDBsum" id="7W3M"/>
<dbReference type="PDBsum" id="7W3U"/>
<dbReference type="PDBsum" id="7W54"/>
<dbReference type="PDBsum" id="7XCR"/>
<dbReference type="PDBsum" id="7XCT"/>
<dbReference type="PDBsum" id="7YQK"/>
<dbReference type="PDBsum" id="8A67"/>
<dbReference type="PDBsum" id="8BS9"/>
<dbReference type="PDBsum" id="8C07"/>
<dbReference type="PDBsum" id="8C61"/>
<dbReference type="PDBsum" id="8CMR"/>
<dbReference type="PDBsum" id="8DMQ"/>
<dbReference type="PDBsum" id="8DMS"/>
<dbReference type="PDBsum" id="8DU4"/>
<dbReference type="PDBsum" id="8EFW"/>
<dbReference type="PDBsum" id="8EFX"/>
<dbReference type="PDBsum" id="8EHO"/>
<dbReference type="PDBsum" id="8G6G"/>
<dbReference type="PDBsum" id="8G6H"/>
<dbReference type="PDBsum" id="8G6Q"/>
<dbReference type="PDBsum" id="8G6S"/>
<dbReference type="PDBsum" id="8GRM"/>
<dbReference type="PDBsum" id="8H1T"/>
<dbReference type="PDBsum" id="8HQY"/>
<dbReference type="PDBsum" id="8IC9"/>
<dbReference type="PDBsum" id="8ITP"/>
<dbReference type="PDBsum" id="8J1P"/>
<dbReference type="PDBsum" id="8K0G"/>
<dbReference type="PDBsum" id="8OYP"/>
<dbReference type="PDBsum" id="8PP6"/>
<dbReference type="PDBsum" id="8Q00"/>
<dbReference type="PDBsum" id="8RQI"/>
<dbReference type="PDBsum" id="8SN3"/>
<dbReference type="PDBsum" id="8SN4"/>
<dbReference type="PDBsum" id="8SN5"/>
<dbReference type="PDBsum" id="8SN6"/>
<dbReference type="PDBsum" id="8SN7"/>
<dbReference type="PDBsum" id="8SN8"/>
<dbReference type="PDBsum" id="8SN9"/>
<dbReference type="PDBsum" id="8SNA"/>
<dbReference type="PDBsum" id="8T2D"/>
<dbReference type="PDBsum" id="8TXV"/>
<dbReference type="PDBsum" id="8TXW"/>
<dbReference type="PDBsum" id="8TXX"/>
<dbReference type="PDBsum" id="8V25"/>
<dbReference type="PDBsum" id="8V26"/>
<dbReference type="PDBsum" id="8V27"/>
<dbReference type="PDBsum" id="8V28"/>
<dbReference type="PDBsum" id="8W31"/>
<dbReference type="PDBsum" id="8WG5"/>
<dbReference type="PDBsum" id="8XEP"/>
<dbReference type="PDBsum" id="9AVT"/>
<dbReference type="PDBsum" id="9AVW"/>
<dbReference type="PDBsum" id="9AZJ"/>
<dbReference type="PDBsum" id="9B0Z"/>
<dbReference type="PDBsum" id="9B12"/>
<dbReference type="PDBsum" id="9C5E"/>
<dbReference type="PDBsum" id="9EMK"/>
<dbReference type="PDBsum" id="9HNW"/>
<dbReference type="BMRB" id="P0CG47"/>
<dbReference type="EMDB" id="EMD-14083"/>
<dbReference type="EMDB" id="EMD-14084"/>
<dbReference type="EMDB" id="EMD-16356"/>
<dbReference type="EMDB" id="EMD-23592"/>
<dbReference type="EMDB" id="EMD-23807"/>
<dbReference type="EMDB" id="EMD-29767"/>
<dbReference type="EMDB" id="EMD-29769"/>
<dbReference type="EMDB" id="EMD-29778"/>
<dbReference type="EMDB" id="EMD-29781"/>
<dbReference type="EMDB" id="EMD-30784"/>
<dbReference type="EMDB" id="EMD-30785"/>
<dbReference type="EMDB" id="EMD-32273"/>
<dbReference type="EMDB" id="EMD-32274"/>
<dbReference type="EMDB" id="EMD-32275"/>
<dbReference type="EMDB" id="EMD-32276"/>
<dbReference type="EMDB" id="EMD-32277"/>
<dbReference type="EMDB" id="EMD-32278"/>
<dbReference type="EMDB" id="EMD-32279"/>
<dbReference type="EMDB" id="EMD-32280"/>
<dbReference type="EMDB" id="EMD-32281"/>
<dbReference type="EMDB" id="EMD-32282"/>
<dbReference type="EMDB" id="EMD-32283"/>
<dbReference type="EMDB" id="EMD-32284"/>
<dbReference type="EMDB" id="EMD-33126"/>
<dbReference type="EMDB" id="EMD-33127"/>
<dbReference type="EMDB" id="EMD-34207"/>
<dbReference type="EMDB" id="EMD-34431"/>
<dbReference type="EMDB" id="EMD-35929"/>
<dbReference type="EMDB" id="EMD-36605"/>
<dbReference type="EMDB" id="EMD-36645"/>
<dbReference type="EMDB" id="EMD-36764"/>
<dbReference type="EMDB" id="EMD-40611"/>
<dbReference type="EMDB" id="EMD-40612"/>
<dbReference type="EMDB" id="EMD-40613"/>
<dbReference type="EMDB" id="EMD-40614"/>
<dbReference type="EMDB" id="EMD-40615"/>
<dbReference type="EMDB" id="EMD-40616"/>
<dbReference type="EMDB" id="EMD-40617"/>
<dbReference type="EMDB" id="EMD-40618"/>
<dbReference type="EMDB" id="EMD-41706"/>
<dbReference type="EMDB" id="EMD-41707"/>
<dbReference type="EMDB" id="EMD-41708"/>
<dbReference type="EMDB" id="EMD-42898"/>
<dbReference type="EMDB" id="EMD-42899"/>
<dbReference type="EMDB" id="EMD-42900"/>
<dbReference type="EMDB" id="EMD-42901"/>
<dbReference type="EMDB" id="EMD-4318"/>
<dbReference type="EMDB" id="EMD-46728"/>
<dbReference type="EMDB" id="EMD-46733"/>
<dbReference type="EMDB" id="EMD-46771"/>
<dbReference type="EMDB" id="EMD-46822"/>
<dbReference type="EMDB" id="EMD-47889"/>
<dbReference type="EMDB" id="EMD-52316"/>
<dbReference type="EMDB" id="EMD-8246"/>
<dbReference type="EMDB" id="EMD-9216"/>
<dbReference type="EMDB" id="EMD-9217"/>
<dbReference type="EMDB" id="EMD-9218"/>
<dbReference type="EMDB" id="EMD-9219"/>
<dbReference type="EMDB" id="EMD-9384"/>
<dbReference type="EMDB" id="EMD-9511"/>
<dbReference type="EMDB" id="EMD-9844"/>
<dbReference type="SASBDB" id="P0CG47"/>
<dbReference type="SMR" id="P0CG47"/>
<dbReference type="BioGRID" id="113162">
    <property type="interactions" value="423"/>
</dbReference>
<dbReference type="FunCoup" id="P0CG47">
    <property type="interactions" value="2058"/>
</dbReference>
<dbReference type="IntAct" id="P0CG47">
    <property type="interactions" value="321"/>
</dbReference>
<dbReference type="MINT" id="P0CG47"/>
<dbReference type="STRING" id="9606.ENSP00000478771"/>
<dbReference type="ChEMBL" id="CHEMBL4523178"/>
<dbReference type="DrugBank" id="DB02542">
    <property type="generic name" value="(4s)-5-Fluoro-L-Leucine"/>
</dbReference>
<dbReference type="MoonDB" id="P0CG47">
    <property type="type" value="Predicted"/>
</dbReference>
<dbReference type="GlyGen" id="P0CG47">
    <property type="glycosylation" value="1 site, 1 O-linked glycan (1 site)"/>
</dbReference>
<dbReference type="iPTMnet" id="P0CG47"/>
<dbReference type="MetOSite" id="P0CG47"/>
<dbReference type="PhosphoSitePlus" id="P0CG47"/>
<dbReference type="SwissPalm" id="P0CG47"/>
<dbReference type="BioMuta" id="UBB"/>
<dbReference type="DMDM" id="302595875"/>
<dbReference type="jPOST" id="P0CG47"/>
<dbReference type="MassIVE" id="P0CG47"/>
<dbReference type="PaxDb" id="9606-ENSP00000304697"/>
<dbReference type="PeptideAtlas" id="P0CG47"/>
<dbReference type="ProteomicsDB" id="52474"/>
<dbReference type="Pumba" id="P0CG47"/>
<dbReference type="TopDownProteomics" id="P0CG47"/>
<dbReference type="ABCD" id="P0CG47">
    <property type="antibodies" value="3 sequenced antibodies"/>
</dbReference>
<dbReference type="Antibodypedia" id="4579">
    <property type="antibodies" value="556 antibodies from 41 providers"/>
</dbReference>
<dbReference type="DNASU" id="7314"/>
<dbReference type="Ensembl" id="ENST00000302182.8">
    <property type="protein sequence ID" value="ENSP00000304697.3"/>
    <property type="gene ID" value="ENSG00000170315.14"/>
</dbReference>
<dbReference type="Ensembl" id="ENST00000395837.1">
    <property type="protein sequence ID" value="ENSP00000379178.1"/>
    <property type="gene ID" value="ENSG00000170315.14"/>
</dbReference>
<dbReference type="Ensembl" id="ENST00000395839.5">
    <property type="protein sequence ID" value="ENSP00000379180.1"/>
    <property type="gene ID" value="ENSG00000170315.14"/>
</dbReference>
<dbReference type="Ensembl" id="ENST00000614404.1">
    <property type="protein sequence ID" value="ENSP00000478771.1"/>
    <property type="gene ID" value="ENSG00000170315.14"/>
</dbReference>
<dbReference type="GeneID" id="7314"/>
<dbReference type="KEGG" id="hsa:7314"/>
<dbReference type="MANE-Select" id="ENST00000302182.8">
    <property type="protein sequence ID" value="ENSP00000304697.3"/>
    <property type="RefSeq nucleotide sequence ID" value="NM_018955.4"/>
    <property type="RefSeq protein sequence ID" value="NP_061828.1"/>
</dbReference>
<dbReference type="AGR" id="HGNC:12463"/>
<dbReference type="CTD" id="7314"/>
<dbReference type="DisGeNET" id="7314"/>
<dbReference type="GeneCards" id="UBB"/>
<dbReference type="HGNC" id="HGNC:12463">
    <property type="gene designation" value="UBB"/>
</dbReference>
<dbReference type="HPA" id="ENSG00000170315">
    <property type="expression patterns" value="Low tissue specificity"/>
</dbReference>
<dbReference type="MalaCards" id="UBB"/>
<dbReference type="MIM" id="191339">
    <property type="type" value="gene"/>
</dbReference>
<dbReference type="neXtProt" id="NX_P0CG47"/>
<dbReference type="OpenTargets" id="ENSG00000170315"/>
<dbReference type="Orphanet" id="99771">
    <property type="disease" value="Bifid uvula"/>
</dbReference>
<dbReference type="Orphanet" id="101023">
    <property type="disease" value="Cleft hard palate"/>
</dbReference>
<dbReference type="Orphanet" id="99772">
    <property type="disease" value="Cleft velum"/>
</dbReference>
<dbReference type="Orphanet" id="155878">
    <property type="disease" value="Submucosal cleft palate"/>
</dbReference>
<dbReference type="VEuPathDB" id="HostDB:ENSG00000170315"/>
<dbReference type="eggNOG" id="KOG0001">
    <property type="taxonomic scope" value="Eukaryota"/>
</dbReference>
<dbReference type="GeneTree" id="ENSGT00940000162439"/>
<dbReference type="InParanoid" id="P0CG47"/>
<dbReference type="OMA" id="NTNMQIF"/>
<dbReference type="OrthoDB" id="9979733at2759"/>
<dbReference type="PAN-GO" id="P0CG47">
    <property type="GO annotations" value="6 GO annotations based on evolutionary models"/>
</dbReference>
<dbReference type="PhylomeDB" id="P0CG47"/>
<dbReference type="TreeFam" id="TF300820"/>
<dbReference type="BioCyc" id="MetaCyc:ENSG00000170315-MONOMER"/>
<dbReference type="PathwayCommons" id="P0CG47"/>
<dbReference type="Reactome" id="R-HSA-110312">
    <property type="pathway name" value="Translesion synthesis by REV1"/>
</dbReference>
<dbReference type="Reactome" id="R-HSA-110314">
    <property type="pathway name" value="Recognition of DNA damage by PCNA-containing replication complex"/>
</dbReference>
<dbReference type="Reactome" id="R-HSA-110320">
    <property type="pathway name" value="Translesion Synthesis by POLH"/>
</dbReference>
<dbReference type="Reactome" id="R-HSA-1169091">
    <property type="pathway name" value="Activation of NF-kappaB in B cells"/>
</dbReference>
<dbReference type="Reactome" id="R-HSA-1169408">
    <property type="pathway name" value="ISG15 antiviral mechanism"/>
</dbReference>
<dbReference type="Reactome" id="R-HSA-1234176">
    <property type="pathway name" value="Oxygen-dependent proline hydroxylation of Hypoxia-inducible Factor Alpha"/>
</dbReference>
<dbReference type="Reactome" id="R-HSA-1236382">
    <property type="pathway name" value="Constitutive Signaling by Ligand-Responsive EGFR Cancer Variants"/>
</dbReference>
<dbReference type="Reactome" id="R-HSA-1236974">
    <property type="pathway name" value="ER-Phagosome pathway"/>
</dbReference>
<dbReference type="Reactome" id="R-HSA-1253288">
    <property type="pathway name" value="Downregulation of ERBB4 signaling"/>
</dbReference>
<dbReference type="Reactome" id="R-HSA-1295596">
    <property type="pathway name" value="Spry regulation of FGF signaling"/>
</dbReference>
<dbReference type="Reactome" id="R-HSA-1358803">
    <property type="pathway name" value="Downregulation of ERBB2:ERBB3 signaling"/>
</dbReference>
<dbReference type="Reactome" id="R-HSA-162588">
    <property type="pathway name" value="Budding and maturation of HIV virion"/>
</dbReference>
<dbReference type="Reactome" id="R-HSA-168638">
    <property type="pathway name" value="NOD1/2 Signaling Pathway"/>
</dbReference>
<dbReference type="Reactome" id="R-HSA-168927">
    <property type="pathway name" value="TICAM1, RIP1-mediated IKK complex recruitment"/>
</dbReference>
<dbReference type="Reactome" id="R-HSA-168928">
    <property type="pathway name" value="DDX58/IFIH1-mediated induction of interferon-alpha/beta"/>
</dbReference>
<dbReference type="Reactome" id="R-HSA-174048">
    <property type="pathway name" value="APC/C:Cdc20 mediated degradation of Cyclin B"/>
</dbReference>
<dbReference type="Reactome" id="R-HSA-174084">
    <property type="pathway name" value="Autodegradation of Cdh1 by Cdh1:APC/C"/>
</dbReference>
<dbReference type="Reactome" id="R-HSA-174113">
    <property type="pathway name" value="SCF-beta-TrCP mediated degradation of Emi1"/>
</dbReference>
<dbReference type="Reactome" id="R-HSA-174154">
    <property type="pathway name" value="APC/C:Cdc20 mediated degradation of Securin"/>
</dbReference>
<dbReference type="Reactome" id="R-HSA-174178">
    <property type="pathway name" value="APC/C:Cdh1 mediated degradation of Cdc20 and other APC/C:Cdh1 targeted proteins in late mitosis/early G1"/>
</dbReference>
<dbReference type="Reactome" id="R-HSA-174184">
    <property type="pathway name" value="Cdc20:Phospho-APC/C mediated degradation of Cyclin A"/>
</dbReference>
<dbReference type="Reactome" id="R-HSA-174490">
    <property type="pathway name" value="Membrane binding and targetting of GAG proteins"/>
</dbReference>
<dbReference type="Reactome" id="R-HSA-175474">
    <property type="pathway name" value="Assembly Of The HIV Virion"/>
</dbReference>
<dbReference type="Reactome" id="R-HSA-179409">
    <property type="pathway name" value="APC-Cdc20 mediated degradation of Nek2A"/>
</dbReference>
<dbReference type="Reactome" id="R-HSA-180534">
    <property type="pathway name" value="Vpu mediated degradation of CD4"/>
</dbReference>
<dbReference type="Reactome" id="R-HSA-180585">
    <property type="pathway name" value="Vif-mediated degradation of APOBEC3G"/>
</dbReference>
<dbReference type="Reactome" id="R-HSA-182971">
    <property type="pathway name" value="EGFR downregulation"/>
</dbReference>
<dbReference type="Reactome" id="R-HSA-187577">
    <property type="pathway name" value="SCF(Skp2)-mediated degradation of p27/p21"/>
</dbReference>
<dbReference type="Reactome" id="R-HSA-195253">
    <property type="pathway name" value="Degradation of beta-catenin by the destruction complex"/>
</dbReference>
<dbReference type="Reactome" id="R-HSA-201681">
    <property type="pathway name" value="TCF dependent signaling in response to WNT"/>
</dbReference>
<dbReference type="Reactome" id="R-HSA-202424">
    <property type="pathway name" value="Downstream TCR signaling"/>
</dbReference>
<dbReference type="Reactome" id="R-HSA-205043">
    <property type="pathway name" value="NRIF signals cell death from the nucleus"/>
</dbReference>
<dbReference type="Reactome" id="R-HSA-209543">
    <property type="pathway name" value="p75NTR recruits signalling complexes"/>
</dbReference>
<dbReference type="Reactome" id="R-HSA-209560">
    <property type="pathway name" value="NF-kB is activated and signals survival"/>
</dbReference>
<dbReference type="Reactome" id="R-HSA-211733">
    <property type="pathway name" value="Regulation of activated PAK-2p34 by proteasome mediated degradation"/>
</dbReference>
<dbReference type="Reactome" id="R-HSA-2122947">
    <property type="pathway name" value="NOTCH1 Intracellular Domain Regulates Transcription"/>
</dbReference>
<dbReference type="Reactome" id="R-HSA-2122948">
    <property type="pathway name" value="Activated NOTCH1 Transmits Signal to the Nucleus"/>
</dbReference>
<dbReference type="Reactome" id="R-HSA-2173788">
    <property type="pathway name" value="Downregulation of TGF-beta receptor signaling"/>
</dbReference>
<dbReference type="Reactome" id="R-HSA-2173791">
    <property type="pathway name" value="TGF-beta receptor signaling in EMT (epithelial to mesenchymal transition)"/>
</dbReference>
<dbReference type="Reactome" id="R-HSA-2173795">
    <property type="pathway name" value="Downregulation of SMAD2/3:SMAD4 transcriptional activity"/>
</dbReference>
<dbReference type="Reactome" id="R-HSA-2173796">
    <property type="pathway name" value="SMAD2/SMAD3:SMAD4 heterotrimer regulates transcription"/>
</dbReference>
<dbReference type="Reactome" id="R-HSA-2467813">
    <property type="pathway name" value="Separation of Sister Chromatids"/>
</dbReference>
<dbReference type="Reactome" id="R-HSA-2559580">
    <property type="pathway name" value="Oxidative Stress Induced Senescence"/>
</dbReference>
<dbReference type="Reactome" id="R-HSA-2559582">
    <property type="pathway name" value="Senescence-Associated Secretory Phenotype (SASP)"/>
</dbReference>
<dbReference type="Reactome" id="R-HSA-2559585">
    <property type="pathway name" value="Oncogene Induced Senescence"/>
</dbReference>
<dbReference type="Reactome" id="R-HSA-2565942">
    <property type="pathway name" value="Regulation of PLK1 Activity at G2/M Transition"/>
</dbReference>
<dbReference type="Reactome" id="R-HSA-2644606">
    <property type="pathway name" value="Constitutive Signaling by NOTCH1 PEST Domain Mutants"/>
</dbReference>
<dbReference type="Reactome" id="R-HSA-2672351">
    <property type="pathway name" value="Stimuli-sensing channels"/>
</dbReference>
<dbReference type="Reactome" id="R-HSA-2691232">
    <property type="pathway name" value="Constitutive Signaling by NOTCH1 HD Domain Mutants"/>
</dbReference>
<dbReference type="Reactome" id="R-HSA-2871837">
    <property type="pathway name" value="FCERI mediated NF-kB activation"/>
</dbReference>
<dbReference type="Reactome" id="R-HSA-2894862">
    <property type="pathway name" value="Constitutive Signaling by NOTCH1 HD+PEST Domain Mutants"/>
</dbReference>
<dbReference type="Reactome" id="R-HSA-2979096">
    <property type="pathway name" value="NOTCH2 Activation and Transmission of Signal to the Nucleus"/>
</dbReference>
<dbReference type="Reactome" id="R-HSA-3134975">
    <property type="pathway name" value="Regulation of innate immune responses to cytosolic DNA"/>
</dbReference>
<dbReference type="Reactome" id="R-HSA-3322077">
    <property type="pathway name" value="Glycogen synthesis"/>
</dbReference>
<dbReference type="Reactome" id="R-HSA-349425">
    <property type="pathway name" value="Autodegradation of the E3 ubiquitin ligase COP1"/>
</dbReference>
<dbReference type="Reactome" id="R-HSA-3769402">
    <property type="pathway name" value="Deactivation of the beta-catenin transactivating complex"/>
</dbReference>
<dbReference type="Reactome" id="R-HSA-3785653">
    <property type="pathway name" value="Myoclonic epilepsy of Lafora"/>
</dbReference>
<dbReference type="Reactome" id="R-HSA-382556">
    <property type="pathway name" value="ABC-family proteins mediated transport"/>
</dbReference>
<dbReference type="Reactome" id="R-HSA-400253">
    <property type="pathway name" value="Circadian Clock"/>
</dbReference>
<dbReference type="Reactome" id="R-HSA-445989">
    <property type="pathway name" value="TAK1-dependent IKK and NF-kappa-B activation"/>
</dbReference>
<dbReference type="Reactome" id="R-HSA-450302">
    <property type="pathway name" value="activated TAK1 mediates p38 MAPK activation"/>
</dbReference>
<dbReference type="Reactome" id="R-HSA-450321">
    <property type="pathway name" value="JNK (c-Jun kinases) phosphorylation and activation mediated by activated human TAK1"/>
</dbReference>
<dbReference type="Reactome" id="R-HSA-450408">
    <property type="pathway name" value="AUF1 (hnRNP D0) binds and destabilizes mRNA"/>
</dbReference>
<dbReference type="Reactome" id="R-HSA-4608870">
    <property type="pathway name" value="Asymmetric localization of PCP proteins"/>
</dbReference>
<dbReference type="Reactome" id="R-HSA-4641257">
    <property type="pathway name" value="Degradation of AXIN"/>
</dbReference>
<dbReference type="Reactome" id="R-HSA-4641258">
    <property type="pathway name" value="Degradation of DVL"/>
</dbReference>
<dbReference type="Reactome" id="R-HSA-4641263">
    <property type="pathway name" value="Regulation of FZD by ubiquitination"/>
</dbReference>
<dbReference type="Reactome" id="R-HSA-5205685">
    <property type="pathway name" value="PINK1-PRKN Mediated Mitophagy"/>
</dbReference>
<dbReference type="Reactome" id="R-HSA-532668">
    <property type="pathway name" value="N-glycan trimming in the ER and Calnexin/Calreticulin cycle"/>
</dbReference>
<dbReference type="Reactome" id="R-HSA-5357905">
    <property type="pathway name" value="Regulation of TNFR1 signaling"/>
</dbReference>
<dbReference type="Reactome" id="R-HSA-5357956">
    <property type="pathway name" value="TNFR1-induced NF-kappa-B signaling pathway"/>
</dbReference>
<dbReference type="Reactome" id="R-HSA-5358346">
    <property type="pathway name" value="Hedgehog ligand biogenesis"/>
</dbReference>
<dbReference type="Reactome" id="R-HSA-5362768">
    <property type="pathway name" value="Hh mutants are degraded by ERAD"/>
</dbReference>
<dbReference type="Reactome" id="R-HSA-5607761">
    <property type="pathway name" value="Dectin-1 mediated noncanonical NF-kB signaling"/>
</dbReference>
<dbReference type="Reactome" id="R-HSA-5607764">
    <property type="pathway name" value="CLEC7A (Dectin-1) signaling"/>
</dbReference>
<dbReference type="Reactome" id="R-HSA-5610780">
    <property type="pathway name" value="Degradation of GLI1 by the proteasome"/>
</dbReference>
<dbReference type="Reactome" id="R-HSA-5610783">
    <property type="pathway name" value="Degradation of GLI2 by the proteasome"/>
</dbReference>
<dbReference type="Reactome" id="R-HSA-5610785">
    <property type="pathway name" value="GLI3 is processed to GLI3R by the proteasome"/>
</dbReference>
<dbReference type="Reactome" id="R-HSA-5632684">
    <property type="pathway name" value="Hedgehog 'on' state"/>
</dbReference>
<dbReference type="Reactome" id="R-HSA-5654726">
    <property type="pathway name" value="Negative regulation of FGFR1 signaling"/>
</dbReference>
<dbReference type="Reactome" id="R-HSA-5654727">
    <property type="pathway name" value="Negative regulation of FGFR2 signaling"/>
</dbReference>
<dbReference type="Reactome" id="R-HSA-5654732">
    <property type="pathway name" value="Negative regulation of FGFR3 signaling"/>
</dbReference>
<dbReference type="Reactome" id="R-HSA-5654733">
    <property type="pathway name" value="Negative regulation of FGFR4 signaling"/>
</dbReference>
<dbReference type="Reactome" id="R-HSA-5655862">
    <property type="pathway name" value="Translesion synthesis by POLK"/>
</dbReference>
<dbReference type="Reactome" id="R-HSA-5656121">
    <property type="pathway name" value="Translesion synthesis by POLI"/>
</dbReference>
<dbReference type="Reactome" id="R-HSA-5656169">
    <property type="pathway name" value="Termination of translesion DNA synthesis"/>
</dbReference>
<dbReference type="Reactome" id="R-HSA-5658442">
    <property type="pathway name" value="Regulation of RAS by GAPs"/>
</dbReference>
<dbReference type="Reactome" id="R-HSA-5668541">
    <property type="pathway name" value="TNFR2 non-canonical NF-kB pathway"/>
</dbReference>
<dbReference type="Reactome" id="R-HSA-5675221">
    <property type="pathway name" value="Negative regulation of MAPK pathway"/>
</dbReference>
<dbReference type="Reactome" id="R-HSA-5675482">
    <property type="pathway name" value="Regulation of necroptotic cell death"/>
</dbReference>
<dbReference type="Reactome" id="R-HSA-5676590">
    <property type="pathway name" value="NIK--&gt;noncanonical NF-kB signaling"/>
</dbReference>
<dbReference type="Reactome" id="R-HSA-5678895">
    <property type="pathway name" value="Defective CFTR causes cystic fibrosis"/>
</dbReference>
<dbReference type="Reactome" id="R-HSA-5684264">
    <property type="pathway name" value="MAP3K8 (TPL2)-dependent MAPK1/3 activation"/>
</dbReference>
<dbReference type="Reactome" id="R-HSA-5685942">
    <property type="pathway name" value="HDR through Homologous Recombination (HRR)"/>
</dbReference>
<dbReference type="Reactome" id="R-HSA-5687128">
    <property type="pathway name" value="MAPK6/MAPK4 signaling"/>
</dbReference>
<dbReference type="Reactome" id="R-HSA-5689603">
    <property type="pathway name" value="UCH proteinases"/>
</dbReference>
<dbReference type="Reactome" id="R-HSA-5689877">
    <property type="pathway name" value="Josephin domain DUBs"/>
</dbReference>
<dbReference type="Reactome" id="R-HSA-5689880">
    <property type="pathway name" value="Ub-specific processing proteases"/>
</dbReference>
<dbReference type="Reactome" id="R-HSA-5689896">
    <property type="pathway name" value="Ovarian tumor domain proteases"/>
</dbReference>
<dbReference type="Reactome" id="R-HSA-5689901">
    <property type="pathway name" value="Metalloprotease DUBs"/>
</dbReference>
<dbReference type="Reactome" id="R-HSA-5693565">
    <property type="pathway name" value="Recruitment and ATM-mediated phosphorylation of repair and signaling proteins at DNA double strand breaks"/>
</dbReference>
<dbReference type="Reactome" id="R-HSA-5693607">
    <property type="pathway name" value="Processing of DNA double-strand break ends"/>
</dbReference>
<dbReference type="Reactome" id="R-HSA-5696394">
    <property type="pathway name" value="DNA Damage Recognition in GG-NER"/>
</dbReference>
<dbReference type="Reactome" id="R-HSA-5696395">
    <property type="pathway name" value="Formation of Incision Complex in GG-NER"/>
</dbReference>
<dbReference type="Reactome" id="R-HSA-5696397">
    <property type="pathway name" value="Gap-filling DNA repair synthesis and ligation in GG-NER"/>
</dbReference>
<dbReference type="Reactome" id="R-HSA-5696400">
    <property type="pathway name" value="Dual Incision in GG-NER"/>
</dbReference>
<dbReference type="Reactome" id="R-HSA-6781823">
    <property type="pathway name" value="Formation of TC-NER Pre-Incision Complex"/>
</dbReference>
<dbReference type="Reactome" id="R-HSA-6781827">
    <property type="pathway name" value="Transcription-Coupled Nucleotide Excision Repair (TC-NER)"/>
</dbReference>
<dbReference type="Reactome" id="R-HSA-6782135">
    <property type="pathway name" value="Dual incision in TC-NER"/>
</dbReference>
<dbReference type="Reactome" id="R-HSA-6782210">
    <property type="pathway name" value="Gap-filling DNA repair synthesis and ligation in TC-NER"/>
</dbReference>
<dbReference type="Reactome" id="R-HSA-6783310">
    <property type="pathway name" value="Fanconi Anemia Pathway"/>
</dbReference>
<dbReference type="Reactome" id="R-HSA-6804756">
    <property type="pathway name" value="Regulation of TP53 Activity through Phosphorylation"/>
</dbReference>
<dbReference type="Reactome" id="R-HSA-6804757">
    <property type="pathway name" value="Regulation of TP53 Degradation"/>
</dbReference>
<dbReference type="Reactome" id="R-HSA-6804760">
    <property type="pathway name" value="Regulation of TP53 Activity through Methylation"/>
</dbReference>
<dbReference type="Reactome" id="R-HSA-6807004">
    <property type="pathway name" value="Negative regulation of MET activity"/>
</dbReference>
<dbReference type="Reactome" id="R-HSA-68867">
    <property type="pathway name" value="Assembly of the pre-replicative complex"/>
</dbReference>
<dbReference type="Reactome" id="R-HSA-68949">
    <property type="pathway name" value="Orc1 removal from chromatin"/>
</dbReference>
<dbReference type="Reactome" id="R-HSA-69017">
    <property type="pathway name" value="CDK-mediated phosphorylation and removal of Cdc6"/>
</dbReference>
<dbReference type="Reactome" id="R-HSA-69231">
    <property type="pathway name" value="Cyclin D associated events in G1"/>
</dbReference>
<dbReference type="Reactome" id="R-HSA-69481">
    <property type="pathway name" value="G2/M Checkpoints"/>
</dbReference>
<dbReference type="Reactome" id="R-HSA-69541">
    <property type="pathway name" value="Stabilization of p53"/>
</dbReference>
<dbReference type="Reactome" id="R-HSA-69601">
    <property type="pathway name" value="Ubiquitin Mediated Degradation of Phosphorylated Cdc25A"/>
</dbReference>
<dbReference type="Reactome" id="R-HSA-75815">
    <property type="pathway name" value="Ubiquitin-dependent degradation of Cyclin D"/>
</dbReference>
<dbReference type="Reactome" id="R-HSA-8849469">
    <property type="pathway name" value="PTK6 Regulates RTKs and Their Effectors AKT1 and DOK1"/>
</dbReference>
<dbReference type="Reactome" id="R-HSA-8852276">
    <property type="pathway name" value="The role of GTSE1 in G2/M progression after G2 checkpoint"/>
</dbReference>
<dbReference type="Reactome" id="R-HSA-8854050">
    <property type="pathway name" value="FBXL7 down-regulates AURKA during mitotic entry and in early mitosis"/>
</dbReference>
<dbReference type="Reactome" id="R-HSA-8856825">
    <property type="pathway name" value="Cargo recognition for clathrin-mediated endocytosis"/>
</dbReference>
<dbReference type="Reactome" id="R-HSA-8856828">
    <property type="pathway name" value="Clathrin-mediated endocytosis"/>
</dbReference>
<dbReference type="Reactome" id="R-HSA-8863795">
    <property type="pathway name" value="Downregulation of ERBB2 signaling"/>
</dbReference>
<dbReference type="Reactome" id="R-HSA-8866427">
    <property type="pathway name" value="VLDLR internalisation and degradation"/>
</dbReference>
<dbReference type="Reactome" id="R-HSA-8866652">
    <property type="pathway name" value="Synthesis of active ubiquitin: roles of E1 and E2 enzymes"/>
</dbReference>
<dbReference type="Reactome" id="R-HSA-8866654">
    <property type="pathway name" value="E3 ubiquitin ligases ubiquitinate target proteins"/>
</dbReference>
<dbReference type="Reactome" id="R-HSA-8875360">
    <property type="pathway name" value="InlB-mediated entry of Listeria monocytogenes into host cell"/>
</dbReference>
<dbReference type="Reactome" id="R-HSA-8876493">
    <property type="pathway name" value="InlA-mediated entry of Listeria monocytogenes into host cells"/>
</dbReference>
<dbReference type="Reactome" id="R-HSA-8939236">
    <property type="pathway name" value="RUNX1 regulates transcription of genes involved in differentiation of HSCs"/>
</dbReference>
<dbReference type="Reactome" id="R-HSA-8939902">
    <property type="pathway name" value="Regulation of RUNX2 expression and activity"/>
</dbReference>
<dbReference type="Reactome" id="R-HSA-8941858">
    <property type="pathway name" value="Regulation of RUNX3 expression and activity"/>
</dbReference>
<dbReference type="Reactome" id="R-HSA-8948747">
    <property type="pathway name" value="Regulation of PTEN localization"/>
</dbReference>
<dbReference type="Reactome" id="R-HSA-8948751">
    <property type="pathway name" value="Regulation of PTEN stability and activity"/>
</dbReference>
<dbReference type="Reactome" id="R-HSA-8951664">
    <property type="pathway name" value="Neddylation"/>
</dbReference>
<dbReference type="Reactome" id="R-HSA-901032">
    <property type="pathway name" value="ER Quality Control Compartment (ERQC)"/>
</dbReference>
<dbReference type="Reactome" id="R-HSA-9010553">
    <property type="pathway name" value="Regulation of expression of SLITs and ROBOs"/>
</dbReference>
<dbReference type="Reactome" id="R-HSA-9013507">
    <property type="pathway name" value="NOTCH3 Activation and Transmission of Signal to the Nucleus"/>
</dbReference>
<dbReference type="Reactome" id="R-HSA-9013973">
    <property type="pathway name" value="TICAM1-dependent activation of IRF3/IRF7"/>
</dbReference>
<dbReference type="Reactome" id="R-HSA-9014325">
    <property type="pathway name" value="TICAM1,TRAF6-dependent induction of TAK1 complex"/>
</dbReference>
<dbReference type="Reactome" id="R-HSA-9020702">
    <property type="pathway name" value="Interleukin-1 signaling"/>
</dbReference>
<dbReference type="Reactome" id="R-HSA-9033241">
    <property type="pathway name" value="Peroxisomal protein import"/>
</dbReference>
<dbReference type="Reactome" id="R-HSA-909733">
    <property type="pathway name" value="Interferon alpha/beta signaling"/>
</dbReference>
<dbReference type="Reactome" id="R-HSA-912631">
    <property type="pathway name" value="Regulation of signaling by CBL"/>
</dbReference>
<dbReference type="Reactome" id="R-HSA-917729">
    <property type="pathway name" value="Endosomal Sorting Complex Required For Transport (ESCRT)"/>
</dbReference>
<dbReference type="Reactome" id="R-HSA-917937">
    <property type="pathway name" value="Iron uptake and transport"/>
</dbReference>
<dbReference type="Reactome" id="R-HSA-936440">
    <property type="pathway name" value="Negative regulators of DDX58/IFIH1 signaling"/>
</dbReference>
<dbReference type="Reactome" id="R-HSA-936964">
    <property type="pathway name" value="Activation of IRF3, IRF7 mediated by TBK1, IKKEpsilon (IKBKE)"/>
</dbReference>
<dbReference type="Reactome" id="R-HSA-937039">
    <property type="pathway name" value="IRAK1 recruits IKK complex"/>
</dbReference>
<dbReference type="Reactome" id="R-HSA-937041">
    <property type="pathway name" value="IKK complex recruitment mediated by RIP1"/>
</dbReference>
<dbReference type="Reactome" id="R-HSA-937042">
    <property type="pathway name" value="IRAK2 mediated activation of TAK1 complex"/>
</dbReference>
<dbReference type="Reactome" id="R-HSA-937072">
    <property type="pathway name" value="TRAF6-mediated induction of TAK1 complex within TLR4 complex"/>
</dbReference>
<dbReference type="Reactome" id="R-HSA-9604323">
    <property type="pathway name" value="Negative regulation of NOTCH4 signaling"/>
</dbReference>
<dbReference type="Reactome" id="R-HSA-9613829">
    <property type="pathway name" value="Chaperone Mediated Autophagy"/>
</dbReference>
<dbReference type="Reactome" id="R-HSA-9615710">
    <property type="pathway name" value="Late endosomal microautophagy"/>
</dbReference>
<dbReference type="Reactome" id="R-HSA-9636383">
    <property type="pathway name" value="Prevention of phagosomal-lysosomal fusion"/>
</dbReference>
<dbReference type="Reactome" id="R-HSA-9637628">
    <property type="pathway name" value="Modulation by Mtb of host immune system"/>
</dbReference>
<dbReference type="Reactome" id="R-HSA-9645460">
    <property type="pathway name" value="Alpha-protein kinase 1 signaling pathway"/>
</dbReference>
<dbReference type="Reactome" id="R-HSA-9646399">
    <property type="pathway name" value="Aggrephagy"/>
</dbReference>
<dbReference type="Reactome" id="R-HSA-9648002">
    <property type="pathway name" value="RAS processing"/>
</dbReference>
<dbReference type="Reactome" id="R-HSA-9664873">
    <property type="pathway name" value="Pexophagy"/>
</dbReference>
<dbReference type="Reactome" id="R-HSA-9680350">
    <property type="pathway name" value="Signaling by CSF1 (M-CSF) in myeloid cells"/>
</dbReference>
<dbReference type="Reactome" id="R-HSA-9683683">
    <property type="pathway name" value="Maturation of protein E"/>
</dbReference>
<dbReference type="Reactome" id="R-HSA-9692916">
    <property type="pathway name" value="SARS-CoV-1 activates/modulates innate immune responses"/>
</dbReference>
<dbReference type="Reactome" id="R-HSA-9694493">
    <property type="pathway name" value="Maturation of protein E"/>
</dbReference>
<dbReference type="Reactome" id="R-HSA-9705462">
    <property type="pathway name" value="Inactivation of CSF3 (G-CSF) signaling"/>
</dbReference>
<dbReference type="Reactome" id="R-HSA-9705671">
    <property type="pathway name" value="SARS-CoV-2 activates/modulates innate and adaptive immune responses"/>
</dbReference>
<dbReference type="Reactome" id="R-HSA-9706369">
    <property type="pathway name" value="Negative regulation of FLT3"/>
</dbReference>
<dbReference type="Reactome" id="R-HSA-9706377">
    <property type="pathway name" value="FLT3 signaling by CBL mutants"/>
</dbReference>
<dbReference type="Reactome" id="R-HSA-9708530">
    <property type="pathway name" value="Regulation of BACH1 activity"/>
</dbReference>
<dbReference type="Reactome" id="R-HSA-9725370">
    <property type="pathway name" value="Signaling by ALK fusions and activated point mutants"/>
</dbReference>
<dbReference type="Reactome" id="R-HSA-975110">
    <property type="pathway name" value="TRAF6 mediated IRF7 activation in TLR7/8 or 9 signaling"/>
</dbReference>
<dbReference type="Reactome" id="R-HSA-975144">
    <property type="pathway name" value="IRAK1 recruits IKK complex upon TLR7/8 or 9 stimulation"/>
</dbReference>
<dbReference type="Reactome" id="R-HSA-975163">
    <property type="pathway name" value="IRAK2 mediated activation of TAK1 complex upon TLR7/8 or 9 stimulation"/>
</dbReference>
<dbReference type="Reactome" id="R-HSA-9755511">
    <property type="pathway name" value="KEAP1-NFE2L2 pathway"/>
</dbReference>
<dbReference type="Reactome" id="R-HSA-9758274">
    <property type="pathway name" value="Regulation of NF-kappa B signaling"/>
</dbReference>
<dbReference type="Reactome" id="R-HSA-9762114">
    <property type="pathway name" value="GSK3B and BTRC:CUL1-mediated-degradation of NFE2L2"/>
</dbReference>
<dbReference type="Reactome" id="R-HSA-977225">
    <property type="pathway name" value="Amyloid fiber formation"/>
</dbReference>
<dbReference type="Reactome" id="R-HSA-9824878">
    <property type="pathway name" value="Regulation of TBK1, IKKEpsilon (IKBKE)-mediated activation of IRF3, IRF7"/>
</dbReference>
<dbReference type="Reactome" id="R-HSA-9828211">
    <property type="pathway name" value="Regulation of TBK1, IKKEpsilon-mediated activation of IRF3, IRF7 upon TLR3 ligation"/>
</dbReference>
<dbReference type="Reactome" id="R-HSA-983168">
    <property type="pathway name" value="Antigen processing: Ubiquitination &amp; Proteasome degradation"/>
</dbReference>
<dbReference type="Reactome" id="R-HSA-9833109">
    <property type="pathway name" value="Evasion by RSV of host interferon responses"/>
</dbReference>
<dbReference type="Reactome" id="R-HSA-9861718">
    <property type="pathway name" value="Regulation of pyruvate metabolism"/>
</dbReference>
<dbReference type="SignaLink" id="P0CG47"/>
<dbReference type="SIGNOR" id="P0CG47"/>
<dbReference type="BioGRID-ORCS" id="7314">
    <property type="hits" value="372 hits in 1066 CRISPR screens"/>
</dbReference>
<dbReference type="ChiTaRS" id="UBB">
    <property type="organism name" value="human"/>
</dbReference>
<dbReference type="EvolutionaryTrace" id="P0CG47"/>
<dbReference type="GeneWiki" id="Ubiquitin_B"/>
<dbReference type="GenomeRNAi" id="7314"/>
<dbReference type="Pharos" id="P0CG47">
    <property type="development level" value="Tbio"/>
</dbReference>
<dbReference type="PRO" id="PR:P0CG47"/>
<dbReference type="Proteomes" id="UP000005640">
    <property type="component" value="Chromosome 17"/>
</dbReference>
<dbReference type="RNAct" id="P0CG47">
    <property type="molecule type" value="protein"/>
</dbReference>
<dbReference type="Bgee" id="ENSG00000170315">
    <property type="expression patterns" value="Expressed in adult organism and 214 other cell types or tissues"/>
</dbReference>
<dbReference type="ExpressionAtlas" id="P0CG47">
    <property type="expression patterns" value="baseline and differential"/>
</dbReference>
<dbReference type="GO" id="GO:0005737">
    <property type="term" value="C:cytoplasm"/>
    <property type="evidence" value="ECO:0000318"/>
    <property type="project" value="GO_Central"/>
</dbReference>
<dbReference type="GO" id="GO:0005829">
    <property type="term" value="C:cytosol"/>
    <property type="evidence" value="ECO:0000304"/>
    <property type="project" value="Reactome"/>
</dbReference>
<dbReference type="GO" id="GO:0030666">
    <property type="term" value="C:endocytic vesicle membrane"/>
    <property type="evidence" value="ECO:0000304"/>
    <property type="project" value="Reactome"/>
</dbReference>
<dbReference type="GO" id="GO:0005789">
    <property type="term" value="C:endoplasmic reticulum membrane"/>
    <property type="evidence" value="ECO:0000304"/>
    <property type="project" value="Reactome"/>
</dbReference>
<dbReference type="GO" id="GO:0010008">
    <property type="term" value="C:endosome membrane"/>
    <property type="evidence" value="ECO:0000304"/>
    <property type="project" value="Reactome"/>
</dbReference>
<dbReference type="GO" id="GO:0070062">
    <property type="term" value="C:extracellular exosome"/>
    <property type="evidence" value="ECO:0007005"/>
    <property type="project" value="UniProtKB"/>
</dbReference>
<dbReference type="GO" id="GO:0005615">
    <property type="term" value="C:extracellular space"/>
    <property type="evidence" value="ECO:0007005"/>
    <property type="project" value="UniProtKB"/>
</dbReference>
<dbReference type="GO" id="GO:0005741">
    <property type="term" value="C:mitochondrial outer membrane"/>
    <property type="evidence" value="ECO:0000304"/>
    <property type="project" value="Reactome"/>
</dbReference>
<dbReference type="GO" id="GO:0005739">
    <property type="term" value="C:mitochondrion"/>
    <property type="evidence" value="ECO:0000314"/>
    <property type="project" value="MGI"/>
</dbReference>
<dbReference type="GO" id="GO:0043005">
    <property type="term" value="C:neuron projection"/>
    <property type="evidence" value="ECO:0000314"/>
    <property type="project" value="MGI"/>
</dbReference>
<dbReference type="GO" id="GO:0043025">
    <property type="term" value="C:neuronal cell body"/>
    <property type="evidence" value="ECO:0000314"/>
    <property type="project" value="MGI"/>
</dbReference>
<dbReference type="GO" id="GO:0005654">
    <property type="term" value="C:nucleoplasm"/>
    <property type="evidence" value="ECO:0000304"/>
    <property type="project" value="Reactome"/>
</dbReference>
<dbReference type="GO" id="GO:0005634">
    <property type="term" value="C:nucleus"/>
    <property type="evidence" value="ECO:0007005"/>
    <property type="project" value="UniProtKB"/>
</dbReference>
<dbReference type="GO" id="GO:0005886">
    <property type="term" value="C:plasma membrane"/>
    <property type="evidence" value="ECO:0000304"/>
    <property type="project" value="Reactome"/>
</dbReference>
<dbReference type="GO" id="GO:0031982">
    <property type="term" value="C:vesicle"/>
    <property type="evidence" value="ECO:0007005"/>
    <property type="project" value="UniProtKB"/>
</dbReference>
<dbReference type="GO" id="GO:0031386">
    <property type="term" value="F:protein tag activity"/>
    <property type="evidence" value="ECO:0000318"/>
    <property type="project" value="GO_Central"/>
</dbReference>
<dbReference type="GO" id="GO:0031625">
    <property type="term" value="F:ubiquitin protein ligase binding"/>
    <property type="evidence" value="ECO:0000318"/>
    <property type="project" value="GO_Central"/>
</dbReference>
<dbReference type="GO" id="GO:0097009">
    <property type="term" value="P:energy homeostasis"/>
    <property type="evidence" value="ECO:0007669"/>
    <property type="project" value="Ensembl"/>
</dbReference>
<dbReference type="GO" id="GO:0060613">
    <property type="term" value="P:fat pad development"/>
    <property type="evidence" value="ECO:0007669"/>
    <property type="project" value="Ensembl"/>
</dbReference>
<dbReference type="GO" id="GO:0008585">
    <property type="term" value="P:female gonad development"/>
    <property type="evidence" value="ECO:0007669"/>
    <property type="project" value="Ensembl"/>
</dbReference>
<dbReference type="GO" id="GO:0007144">
    <property type="term" value="P:female meiosis I"/>
    <property type="evidence" value="ECO:0007669"/>
    <property type="project" value="Ensembl"/>
</dbReference>
<dbReference type="GO" id="GO:0021888">
    <property type="term" value="P:hypothalamus gonadotrophin-releasing hormone neuron development"/>
    <property type="evidence" value="ECO:0007669"/>
    <property type="project" value="Ensembl"/>
</dbReference>
<dbReference type="GO" id="GO:0007141">
    <property type="term" value="P:male meiosis I"/>
    <property type="evidence" value="ECO:0007669"/>
    <property type="project" value="Ensembl"/>
</dbReference>
<dbReference type="GO" id="GO:0047497">
    <property type="term" value="P:mitochondrion transport along microtubule"/>
    <property type="evidence" value="ECO:0000314"/>
    <property type="project" value="MGI"/>
</dbReference>
<dbReference type="GO" id="GO:0019941">
    <property type="term" value="P:modification-dependent protein catabolic process"/>
    <property type="evidence" value="ECO:0000318"/>
    <property type="project" value="GO_Central"/>
</dbReference>
<dbReference type="GO" id="GO:0048812">
    <property type="term" value="P:neuron projection morphogenesis"/>
    <property type="evidence" value="ECO:0000315"/>
    <property type="project" value="MGI"/>
</dbReference>
<dbReference type="GO" id="GO:1902255">
    <property type="term" value="P:positive regulation of intrinsic apoptotic signaling pathway by p53 class mediator"/>
    <property type="evidence" value="ECO:0000314"/>
    <property type="project" value="MGI"/>
</dbReference>
<dbReference type="GO" id="GO:1902527">
    <property type="term" value="P:positive regulation of protein monoubiquitination"/>
    <property type="evidence" value="ECO:0000315"/>
    <property type="project" value="ParkinsonsUK-UCL"/>
</dbReference>
<dbReference type="GO" id="GO:0031398">
    <property type="term" value="P:positive regulation of protein ubiquitination"/>
    <property type="evidence" value="ECO:0000314"/>
    <property type="project" value="ParkinsonsUK-UCL"/>
</dbReference>
<dbReference type="GO" id="GO:0016567">
    <property type="term" value="P:protein ubiquitination"/>
    <property type="evidence" value="ECO:0000318"/>
    <property type="project" value="GO_Central"/>
</dbReference>
<dbReference type="GO" id="GO:0051881">
    <property type="term" value="P:regulation of mitochondrial membrane potential"/>
    <property type="evidence" value="ECO:0000314"/>
    <property type="project" value="MGI"/>
</dbReference>
<dbReference type="GO" id="GO:0043523">
    <property type="term" value="P:regulation of neuron apoptotic process"/>
    <property type="evidence" value="ECO:0000314"/>
    <property type="project" value="MGI"/>
</dbReference>
<dbReference type="GO" id="GO:0061136">
    <property type="term" value="P:regulation of proteasomal protein catabolic process"/>
    <property type="evidence" value="ECO:0000314"/>
    <property type="project" value="MGI"/>
</dbReference>
<dbReference type="GO" id="GO:0072520">
    <property type="term" value="P:seminiferous tubule development"/>
    <property type="evidence" value="ECO:0007669"/>
    <property type="project" value="Ensembl"/>
</dbReference>
<dbReference type="CDD" id="cd01803">
    <property type="entry name" value="Ubl_ubiquitin"/>
    <property type="match status" value="3"/>
</dbReference>
<dbReference type="FunFam" id="3.10.20.90:FF:000158">
    <property type="entry name" value="Polyubiquitin 5"/>
    <property type="match status" value="3"/>
</dbReference>
<dbReference type="Gene3D" id="3.10.20.90">
    <property type="entry name" value="Phosphatidylinositol 3-kinase Catalytic Subunit, Chain A, domain 1"/>
    <property type="match status" value="3"/>
</dbReference>
<dbReference type="InterPro" id="IPR000626">
    <property type="entry name" value="Ubiquitin-like_dom"/>
</dbReference>
<dbReference type="InterPro" id="IPR029071">
    <property type="entry name" value="Ubiquitin-like_domsf"/>
</dbReference>
<dbReference type="InterPro" id="IPR019954">
    <property type="entry name" value="Ubiquitin_CS"/>
</dbReference>
<dbReference type="InterPro" id="IPR019956">
    <property type="entry name" value="Ubiquitin_dom"/>
</dbReference>
<dbReference type="InterPro" id="IPR050158">
    <property type="entry name" value="Ubiquitin_ubiquitin-like"/>
</dbReference>
<dbReference type="PANTHER" id="PTHR10666">
    <property type="entry name" value="UBIQUITIN"/>
    <property type="match status" value="1"/>
</dbReference>
<dbReference type="Pfam" id="PF00240">
    <property type="entry name" value="ubiquitin"/>
    <property type="match status" value="3"/>
</dbReference>
<dbReference type="PRINTS" id="PR00348">
    <property type="entry name" value="UBIQUITIN"/>
</dbReference>
<dbReference type="SMART" id="SM00213">
    <property type="entry name" value="UBQ"/>
    <property type="match status" value="3"/>
</dbReference>
<dbReference type="SUPFAM" id="SSF54236">
    <property type="entry name" value="Ubiquitin-like"/>
    <property type="match status" value="3"/>
</dbReference>
<dbReference type="PROSITE" id="PS00299">
    <property type="entry name" value="UBIQUITIN_1"/>
    <property type="match status" value="3"/>
</dbReference>
<dbReference type="PROSITE" id="PS50053">
    <property type="entry name" value="UBIQUITIN_2"/>
    <property type="match status" value="3"/>
</dbReference>
<keyword id="KW-0002">3D-structure</keyword>
<keyword id="KW-0013">ADP-ribosylation</keyword>
<keyword id="KW-0963">Cytoplasm</keyword>
<keyword id="KW-0903">Direct protein sequencing</keyword>
<keyword id="KW-1017">Isopeptide bond</keyword>
<keyword id="KW-0472">Membrane</keyword>
<keyword id="KW-0496">Mitochondrion</keyword>
<keyword id="KW-1000">Mitochondrion outer membrane</keyword>
<keyword id="KW-0539">Nucleus</keyword>
<keyword id="KW-0597">Phosphoprotein</keyword>
<keyword id="KW-1185">Reference proteome</keyword>
<keyword id="KW-0677">Repeat</keyword>
<keyword id="KW-0832">Ubl conjugation</keyword>
<feature type="chain" id="PRO_0000396174" description="Ubiquitin">
    <location>
        <begin position="1"/>
        <end position="76"/>
    </location>
</feature>
<feature type="chain" id="PRO_0000396175" description="Ubiquitin">
    <location>
        <begin position="77"/>
        <end position="152"/>
    </location>
</feature>
<feature type="chain" id="PRO_0000396176" description="Ubiquitin">
    <location>
        <begin position="153"/>
        <end position="228"/>
    </location>
</feature>
<feature type="propeptide" id="PRO_0000396177">
    <location>
        <position position="229"/>
    </location>
</feature>
<feature type="domain" description="Ubiquitin-like 1" evidence="2">
    <location>
        <begin position="1"/>
        <end position="76"/>
    </location>
</feature>
<feature type="domain" description="Ubiquitin-like 2" evidence="2">
    <location>
        <begin position="77"/>
        <end position="152"/>
    </location>
</feature>
<feature type="domain" description="Ubiquitin-like 3" evidence="2">
    <location>
        <begin position="153"/>
        <end position="228"/>
    </location>
</feature>
<feature type="site" description="Interacts with activating enzyme">
    <location>
        <position position="54"/>
    </location>
</feature>
<feature type="site" description="Essential for function">
    <location>
        <position position="68"/>
    </location>
</feature>
<feature type="site" description="Interacts with activating enzyme">
    <location>
        <position position="72"/>
    </location>
</feature>
<feature type="modified residue" description="Phosphoserine; by PINK1" evidence="6 7 8 9">
    <location>
        <position position="65"/>
    </location>
</feature>
<feature type="modified residue" description="(Microbial infection) ADP-ribosylthreonine" evidence="15">
    <location>
        <position position="66"/>
    </location>
</feature>
<feature type="modified residue" description="ADP-ribosylglycine" evidence="13">
    <location>
        <position position="76"/>
    </location>
</feature>
<feature type="cross-link" description="Glycyl lysine isopeptide (Lys-Gly) (interchain with G-Cter in ubiquitin)" evidence="3">
    <location>
        <position position="6"/>
    </location>
</feature>
<feature type="cross-link" description="Glycyl lysine isopeptide (Lys-Gly) (interchain with G-Cter in ubiquitin)" evidence="3 4">
    <location>
        <position position="11"/>
    </location>
</feature>
<feature type="cross-link" description="Glycyl lysine isopeptide (Lys-Gly) (interchain with G-Cter in ubiquitin)" evidence="20">
    <location>
        <position position="27"/>
    </location>
</feature>
<feature type="cross-link" description="Glycyl lysine isopeptide (Lys-Gly) (interchain with G-Cter in ubiquitin)" evidence="4 10 11 16">
    <location>
        <position position="29"/>
    </location>
</feature>
<feature type="cross-link" description="Glycyl lysine isopeptide (Lys-Gly) (interchain with G-Cter in ubiquitin)" evidence="11">
    <location>
        <position position="33"/>
    </location>
</feature>
<feature type="cross-link" description="Glycyl lysine isopeptide (Lys-Gly) (interchain with G-Cter in ubiquitin)" evidence="3 4">
    <location>
        <position position="48"/>
    </location>
</feature>
<feature type="cross-link" description="Glycyl lysine isopeptide (Lys-Gly) (interchain with G-Cter in ubiquitin)" evidence="4 5">
    <location>
        <position position="63"/>
    </location>
</feature>
<feature type="cross-link" description="Glycyl lysine isopeptide (Gly-Lys) (interchain with K-? in acceptor proteins)">
    <location>
        <position position="76"/>
    </location>
</feature>
<feature type="sequence variant" id="VAR_066248" description="In UBB(+1); loss of polyubiquitination; impairs the ubiquitin-proteasome pathway; refractory to disassembly by DUBs; slow degradation by UCHL3.">
    <original>GMQIFVKTLTGKTITLEVEPSDTIENVKAKIQDKEGIPPDQQRLIFAGKQLEDGRTLSDYNIQKESTLHLVLRLRGGMQIFVKTLTGKTITLEVEPSDTIENVKAKIQDKEGIPPDQQRLIFAGKQLEDGRTLSDYNIQKESTLHLVLRLRGGC</original>
    <variation>YADLREDPDRQDHHPGSGAQ</variation>
    <location>
        <begin position="76"/>
        <end position="229"/>
    </location>
</feature>
<feature type="mutagenesis site" description="No effect on HLTF-mediated polyubiquitination of PCNA." evidence="5">
    <original>K</original>
    <variation>R</variation>
    <location>
        <position position="48"/>
    </location>
</feature>
<feature type="mutagenesis site" description="Abolishes HLTF-mediated polyubiquitination of PCNA." evidence="5">
    <original>K</original>
    <variation>R</variation>
    <location>
        <position position="63"/>
    </location>
</feature>
<feature type="mutagenesis site" description="Prevents phosphorylation in case of mitophagy. Decreased localization of PRKN to mitochondria." evidence="6 7 8">
    <original>S</original>
    <variation>A</variation>
    <location>
        <position position="65"/>
    </location>
</feature>
<feature type="mutagenesis site" description="Phosphomimetic mutant that binds and activates PRKN." evidence="7">
    <original>S</original>
    <variation>D</variation>
    <location>
        <position position="65"/>
    </location>
</feature>
<feature type="mutagenesis site" description="Phosphomimetic mutant that binds and activates PRKN." evidence="7">
    <original>S</original>
    <variation>E</variation>
    <location>
        <position position="65"/>
    </location>
</feature>
<feature type="mutagenesis site" description="Loss of DTX3L-mediated polyubiquitination of histone H3 and H4." evidence="13">
    <original>H</original>
    <variation>G</variation>
    <location>
        <position position="68"/>
    </location>
</feature>
<feature type="mutagenesis site" description="No effect on ADP-ribosylation." evidence="13">
    <original>R</original>
    <variation>G</variation>
    <location>
        <position position="72"/>
    </location>
</feature>
<feature type="mutagenesis site" description="No effect on ADP-ribosylation, when associated with K-74." evidence="13">
    <original>R</original>
    <variation>K</variation>
    <location>
        <position position="72"/>
    </location>
</feature>
<feature type="mutagenesis site" description="No effect on ADP-ribosylation." evidence="13">
    <original>R</original>
    <variation>G</variation>
    <location>
        <position position="74"/>
    </location>
</feature>
<feature type="mutagenesis site" description="No effect on ADP-ribosylation, when associated with K-72." evidence="13">
    <original>R</original>
    <variation>K</variation>
    <location>
        <position position="74"/>
    </location>
</feature>
<feature type="mutagenesis site" description="Loss of ADP-ribosylation." evidence="13">
    <original>G</original>
    <variation>A</variation>
    <location>
        <position position="76"/>
    </location>
</feature>
<feature type="strand" evidence="34">
    <location>
        <begin position="78"/>
        <end position="82"/>
    </location>
</feature>
<feature type="strand" evidence="30">
    <location>
        <begin position="84"/>
        <end position="86"/>
    </location>
</feature>
<feature type="strand" evidence="34">
    <location>
        <begin position="88"/>
        <end position="92"/>
    </location>
</feature>
<feature type="helix" evidence="34">
    <location>
        <begin position="99"/>
        <end position="110"/>
    </location>
</feature>
<feature type="helix" evidence="34">
    <location>
        <begin position="114"/>
        <end position="116"/>
    </location>
</feature>
<feature type="strand" evidence="34">
    <location>
        <begin position="117"/>
        <end position="121"/>
    </location>
</feature>
<feature type="helix" evidence="34">
    <location>
        <begin position="133"/>
        <end position="135"/>
    </location>
</feature>
<feature type="strand" evidence="34">
    <location>
        <begin position="142"/>
        <end position="147"/>
    </location>
</feature>
<feature type="strand" evidence="28">
    <location>
        <begin position="154"/>
        <end position="159"/>
    </location>
</feature>
<feature type="strand" evidence="31">
    <location>
        <begin position="160"/>
        <end position="162"/>
    </location>
</feature>
<feature type="strand" evidence="28">
    <location>
        <begin position="164"/>
        <end position="168"/>
    </location>
</feature>
<feature type="strand" evidence="29">
    <location>
        <begin position="171"/>
        <end position="174"/>
    </location>
</feature>
<feature type="helix" evidence="28">
    <location>
        <begin position="175"/>
        <end position="186"/>
    </location>
</feature>
<feature type="helix" evidence="28">
    <location>
        <begin position="190"/>
        <end position="192"/>
    </location>
</feature>
<feature type="strand" evidence="28">
    <location>
        <begin position="193"/>
        <end position="197"/>
    </location>
</feature>
<feature type="strand" evidence="32">
    <location>
        <begin position="200"/>
        <end position="202"/>
    </location>
</feature>
<feature type="strand" evidence="27">
    <location>
        <begin position="206"/>
        <end position="208"/>
    </location>
</feature>
<feature type="helix" evidence="28">
    <location>
        <begin position="209"/>
        <end position="211"/>
    </location>
</feature>
<feature type="strand" evidence="28">
    <location>
        <begin position="218"/>
        <end position="223"/>
    </location>
</feature>
<feature type="strand" evidence="33">
    <location>
        <begin position="226"/>
        <end position="228"/>
    </location>
</feature>
<evidence type="ECO:0000250" key="1"/>
<evidence type="ECO:0000255" key="2">
    <source>
        <dbReference type="PROSITE-ProRule" id="PRU00214"/>
    </source>
</evidence>
<evidence type="ECO:0000269" key="3">
    <source>
    </source>
</evidence>
<evidence type="ECO:0000269" key="4">
    <source>
    </source>
</evidence>
<evidence type="ECO:0000269" key="5">
    <source>
    </source>
</evidence>
<evidence type="ECO:0000269" key="6">
    <source>
    </source>
</evidence>
<evidence type="ECO:0000269" key="7">
    <source>
    </source>
</evidence>
<evidence type="ECO:0000269" key="8">
    <source>
    </source>
</evidence>
<evidence type="ECO:0000269" key="9">
    <source>
    </source>
</evidence>
<evidence type="ECO:0000269" key="10">
    <source>
    </source>
</evidence>
<evidence type="ECO:0000269" key="11">
    <source>
    </source>
</evidence>
<evidence type="ECO:0000269" key="12">
    <source>
    </source>
</evidence>
<evidence type="ECO:0000269" key="13">
    <source>
    </source>
</evidence>
<evidence type="ECO:0000269" key="14">
    <source>
    </source>
</evidence>
<evidence type="ECO:0000269" key="15">
    <source>
    </source>
</evidence>
<evidence type="ECO:0000269" key="16">
    <source>
    </source>
</evidence>
<evidence type="ECO:0000303" key="17">
    <source>
    </source>
</evidence>
<evidence type="ECO:0000305" key="18"/>
<evidence type="ECO:0000305" key="19">
    <source>
    </source>
</evidence>
<evidence type="ECO:0000305" key="20">
    <source>
    </source>
</evidence>
<evidence type="ECO:0000305" key="21">
    <source>
    </source>
</evidence>
<evidence type="ECO:0000305" key="22">
    <source>
    </source>
</evidence>
<evidence type="ECO:0000305" key="23">
    <source>
    </source>
</evidence>
<evidence type="ECO:0007744" key="24">
    <source>
        <dbReference type="PDB" id="5CAW"/>
    </source>
</evidence>
<evidence type="ECO:0007744" key="25">
    <source>
        <dbReference type="PDB" id="6BYH"/>
    </source>
</evidence>
<evidence type="ECO:0007744" key="26">
    <source>
        <dbReference type="PDB" id="6C16"/>
    </source>
</evidence>
<evidence type="ECO:0007829" key="27">
    <source>
        <dbReference type="PDB" id="5GO7"/>
    </source>
</evidence>
<evidence type="ECO:0007829" key="28">
    <source>
        <dbReference type="PDB" id="5NVG"/>
    </source>
</evidence>
<evidence type="ECO:0007829" key="29">
    <source>
        <dbReference type="PDB" id="5XPK"/>
    </source>
</evidence>
<evidence type="ECO:0007829" key="30">
    <source>
        <dbReference type="PDB" id="7MYH"/>
    </source>
</evidence>
<evidence type="ECO:0007829" key="31">
    <source>
        <dbReference type="PDB" id="7NBB"/>
    </source>
</evidence>
<evidence type="ECO:0007829" key="32">
    <source>
        <dbReference type="PDB" id="7UV5"/>
    </source>
</evidence>
<evidence type="ECO:0007829" key="33">
    <source>
        <dbReference type="PDB" id="8EFW"/>
    </source>
</evidence>
<evidence type="ECO:0007829" key="34">
    <source>
        <dbReference type="PDB" id="9AVW"/>
    </source>
</evidence>
<proteinExistence type="evidence at protein level"/>
<accession>P0CG47</accession>
<accession>P02248</accession>
<accession>P02249</accession>
<accession>P02250</accession>
<accession>P62988</accession>
<accession>Q29120</accession>
<accession>Q6LBL4</accession>
<accession>Q6LDU5</accession>
<accession>Q8WYN8</accession>
<accession>Q91887</accession>
<accession>Q91888</accession>
<accession>Q9BWD6</accession>
<accession>Q9BX98</accession>
<accession>Q9UEF2</accession>
<accession>Q9UEG1</accession>
<accession>Q9UEK8</accession>
<accession>Q9UPK7</accession>
<sequence length="229" mass="25762">MQIFVKTLTGKTITLEVEPSDTIENVKAKIQDKEGIPPDQQRLIFAGKQLEDGRTLSDYNIQKESTLHLVLRLRGGMQIFVKTLTGKTITLEVEPSDTIENVKAKIQDKEGIPPDQQRLIFAGKQLEDGRTLSDYNIQKESTLHLVLRLRGGMQIFVKTLTGKTITLEVEPSDTIENVKAKIQDKEGIPPDQQRLIFAGKQLEDGRTLSDYNIQKESTLHLVLRLRGGC</sequence>
<name>UBB_HUMAN</name>
<gene>
    <name type="primary">UBB</name>
</gene>
<reference key="1">
    <citation type="journal article" date="1987" name="Nucleic Acids Res.">
        <title>The human ubiquitin gene family: structure of a gene and pseudogenes from the Ub B subfamily.</title>
        <authorList>
            <person name="Baker R.T."/>
            <person name="Board P.G."/>
        </authorList>
    </citation>
    <scope>NUCLEOTIDE SEQUENCE [GENOMIC DNA]</scope>
    <source>
        <tissue>Blood</tissue>
    </source>
</reference>
<reference key="2">
    <citation type="journal article" date="2003" name="J. Mol. Evol.">
        <title>Lineage-specific homogenization of the polyubiquitin gene among human and great apes.</title>
        <authorList>
            <person name="Tachikui H."/>
            <person name="Saitou N."/>
            <person name="Nakajima T."/>
            <person name="Hayasaka I."/>
            <person name="Ishida T."/>
            <person name="Inoue I."/>
        </authorList>
    </citation>
    <scope>NUCLEOTIDE SEQUENCE [GENOMIC DNA]</scope>
</reference>
<reference key="3">
    <citation type="journal article" date="2006" name="Nature">
        <title>DNA sequence of human chromosome 17 and analysis of rearrangement in the human lineage.</title>
        <authorList>
            <person name="Zody M.C."/>
            <person name="Garber M."/>
            <person name="Adams D.J."/>
            <person name="Sharpe T."/>
            <person name="Harrow J."/>
            <person name="Lupski J.R."/>
            <person name="Nicholson C."/>
            <person name="Searle S.M."/>
            <person name="Wilming L."/>
            <person name="Young S.K."/>
            <person name="Abouelleil A."/>
            <person name="Allen N.R."/>
            <person name="Bi W."/>
            <person name="Bloom T."/>
            <person name="Borowsky M.L."/>
            <person name="Bugalter B.E."/>
            <person name="Butler J."/>
            <person name="Chang J.L."/>
            <person name="Chen C.-K."/>
            <person name="Cook A."/>
            <person name="Corum B."/>
            <person name="Cuomo C.A."/>
            <person name="de Jong P.J."/>
            <person name="DeCaprio D."/>
            <person name="Dewar K."/>
            <person name="FitzGerald M."/>
            <person name="Gilbert J."/>
            <person name="Gibson R."/>
            <person name="Gnerre S."/>
            <person name="Goldstein S."/>
            <person name="Grafham D.V."/>
            <person name="Grocock R."/>
            <person name="Hafez N."/>
            <person name="Hagopian D.S."/>
            <person name="Hart E."/>
            <person name="Norman C.H."/>
            <person name="Humphray S."/>
            <person name="Jaffe D.B."/>
            <person name="Jones M."/>
            <person name="Kamal M."/>
            <person name="Khodiyar V.K."/>
            <person name="LaButti K."/>
            <person name="Laird G."/>
            <person name="Lehoczky J."/>
            <person name="Liu X."/>
            <person name="Lokyitsang T."/>
            <person name="Loveland J."/>
            <person name="Lui A."/>
            <person name="Macdonald P."/>
            <person name="Major J.E."/>
            <person name="Matthews L."/>
            <person name="Mauceli E."/>
            <person name="McCarroll S.A."/>
            <person name="Mihalev A.H."/>
            <person name="Mudge J."/>
            <person name="Nguyen C."/>
            <person name="Nicol R."/>
            <person name="O'Leary S.B."/>
            <person name="Osoegawa K."/>
            <person name="Schwartz D.C."/>
            <person name="Shaw-Smith C."/>
            <person name="Stankiewicz P."/>
            <person name="Steward C."/>
            <person name="Swarbreck D."/>
            <person name="Venkataraman V."/>
            <person name="Whittaker C.A."/>
            <person name="Yang X."/>
            <person name="Zimmer A.R."/>
            <person name="Bradley A."/>
            <person name="Hubbard T."/>
            <person name="Birren B.W."/>
            <person name="Rogers J."/>
            <person name="Lander E.S."/>
            <person name="Nusbaum C."/>
        </authorList>
    </citation>
    <scope>NUCLEOTIDE SEQUENCE [LARGE SCALE GENOMIC DNA]</scope>
</reference>
<reference key="4">
    <citation type="journal article" date="2004" name="Genome Res.">
        <title>The status, quality, and expansion of the NIH full-length cDNA project: the Mammalian Gene Collection (MGC).</title>
        <authorList>
            <consortium name="The MGC Project Team"/>
        </authorList>
    </citation>
    <scope>NUCLEOTIDE SEQUENCE [LARGE SCALE MRNA]</scope>
    <source>
        <tissue>Brain</tissue>
        <tissue>Liver</tissue>
        <tissue>Lung</tissue>
    </source>
</reference>
<reference key="5">
    <citation type="submission" date="2008-12" db="UniProtKB">
        <authorList>
            <person name="Lubec G."/>
            <person name="Chen W.-Q."/>
            <person name="Sun Y."/>
        </authorList>
    </citation>
    <scope>PROTEIN SEQUENCE OF 1-27; 30-42 AND 55-72</scope>
    <scope>IDENTIFICATION BY MASS SPECTROMETRY</scope>
    <source>
        <tissue>Fetal brain cortex</tissue>
    </source>
</reference>
<reference key="6">
    <citation type="journal article" date="1975" name="Nature">
        <title>Molecular conservation of 74 amino acid sequence of ubiquitin between cattle and man.</title>
        <authorList>
            <person name="Schlesinger D.H."/>
            <person name="Goldstein G."/>
        </authorList>
    </citation>
    <scope>PROTEIN SEQUENCE OF 1-74</scope>
</reference>
<reference key="7">
    <citation type="journal article" date="2006" name="J. Biol. Chem.">
        <title>Alzheimer disease-specific conformation of hyperphosphorylated paired helical filament-tau is polyubiquitinated through Lys-48, Lys-11, and Lys-6 ubiquitin conjugation.</title>
        <authorList>
            <person name="Cripps D."/>
            <person name="Thomas S.N."/>
            <person name="Jeng Y."/>
            <person name="Yang F."/>
            <person name="Davies P."/>
            <person name="Yang A.J."/>
        </authorList>
    </citation>
    <scope>PROTEIN SEQUENCE OF 1-27 AND 43-54</scope>
    <scope>UBIQUITINATION AT LYS-6; LYS-11 AND LYS-48</scope>
    <scope>IDENTIFICATION BY MASS SPECTROMETRY</scope>
</reference>
<reference key="8">
    <citation type="journal article" date="2006" name="Mol. Cell">
        <title>Differential regulation of EGF receptor internalization and degradation by multiubiquitination within the kinase domain.</title>
        <authorList>
            <person name="Huang F."/>
            <person name="Kirkpatrick D."/>
            <person name="Jiang X."/>
            <person name="Gygi S.P."/>
            <person name="Sorkin A."/>
        </authorList>
    </citation>
    <scope>FUNCTION</scope>
    <scope>UBIQUITINATION AT LYS-11; LYS-29; LYS-48 AND LYS-63</scope>
    <scope>IDENTIFICATION BY MASS SPECTROMETRY</scope>
</reference>
<reference key="9">
    <citation type="journal article" date="2004" name="J. Biol. Chem.">
        <title>Functional regulation of FEZ1 by the U-box-type ubiquitin ligase E4B contributes to neuritogenesis.</title>
        <authorList>
            <person name="Okumura F."/>
            <person name="Hatakeyama S."/>
            <person name="Matsumoto M."/>
            <person name="Kamura T."/>
            <person name="Nakayama K."/>
        </authorList>
    </citation>
    <scope>UBIQUITINATION AT LYS-27</scope>
</reference>
<reference key="10">
    <citation type="journal article" date="2008" name="Proc. Natl. Acad. Sci. U.S.A.">
        <title>Polyubiquitination of proliferating cell nuclear antigen by HLTF and SHPRH prevents genomic instability from stalled replication forks.</title>
        <authorList>
            <person name="Motegi A."/>
            <person name="Liaw H.-J."/>
            <person name="Lee K.-Y."/>
            <person name="Roest H.P."/>
            <person name="Maas A."/>
            <person name="Wu X."/>
            <person name="Moinova H."/>
            <person name="Markowitz S.D."/>
            <person name="Ding H."/>
            <person name="Hoeijmakers J.H.J."/>
            <person name="Myung K."/>
        </authorList>
    </citation>
    <scope>UBIQUITINATION AT LYS-63</scope>
    <scope>MUTAGENESIS OF LYS-48 AND LYS-63</scope>
</reference>
<reference key="11">
    <citation type="journal article" date="2009" name="Biochem. Soc. Trans.">
        <title>The emerging complexity of protein ubiquitination.</title>
        <authorList>
            <person name="Komander D."/>
        </authorList>
    </citation>
    <scope>REVIEW</scope>
    <scope>FUNCTION</scope>
</reference>
<reference key="12">
    <citation type="journal article" date="2011" name="FEBS Lett.">
        <title>Mutant ubiquitin (UBB(+1)) associated with neurodegenerative disorders is hydrolyzed by ubiquitin C-terminal hydrolase L3 (UCH-L3).</title>
        <authorList>
            <person name="Dennissen F.J."/>
            <person name="Kholod N."/>
            <person name="Hermes D.J."/>
            <person name="Kemmerling N."/>
            <person name="Steinbusch H.W."/>
            <person name="Dantuma N.P."/>
            <person name="van Leeuwen F.W."/>
        </authorList>
    </citation>
    <scope>CLEAVAGE BY UCHL3 (VARIANT UBB(+1))</scope>
</reference>
<reference key="13">
    <citation type="journal article" date="1998" name="Science">
        <title>Frameshift mutants of beta amyloid precursor protein and ubiquitin-B in Alzheimer's and Down patients.</title>
        <authorList>
            <person name="van Leeuwen F.W."/>
            <person name="de Kleijn D.P."/>
            <person name="van den Hurk H.H."/>
            <person name="Neubauer A."/>
            <person name="Sonnemans M.A."/>
            <person name="Sluijs J.A."/>
            <person name="Koycu S."/>
            <person name="Ramdjielal R.D."/>
            <person name="Salehi A."/>
            <person name="Martens G.J."/>
            <person name="Grosveld F.G."/>
            <person name="Peter J."/>
            <person name="Burbach H."/>
            <person name="Hol E.M."/>
        </authorList>
    </citation>
    <scope>IDENTIFICATION OF VARIANT UBB(+1)</scope>
</reference>
<reference key="14">
    <citation type="journal article" date="2003" name="FASEB J.">
        <title>Disease-specific accumulation of mutant ubiquitin as a marker for proteasomal dysfunction in the brain.</title>
        <authorList>
            <person name="Fischer D.F."/>
            <person name="De Vos R.A."/>
            <person name="Van Dijk R."/>
            <person name="De Vrij F.M."/>
            <person name="Proper E.A."/>
            <person name="Sonnemans M.A."/>
            <person name="Verhage M.C."/>
            <person name="Sluijs J.A."/>
            <person name="Hobo B."/>
            <person name="Zouambia M."/>
            <person name="Steur E.N."/>
            <person name="Kamphorst W."/>
            <person name="Hol E.M."/>
            <person name="Van Leeuwen F.W."/>
        </authorList>
    </citation>
    <scope>TISSUE SPECIFICITY (VARIANT UBB(+1))</scope>
</reference>
<reference key="15">
    <citation type="journal article" date="2014" name="Biochem. J.">
        <title>Parkin is activated by PINK1-dependent phosphorylation of ubiquitin at Ser65.</title>
        <authorList>
            <person name="Kazlauskaite A."/>
            <person name="Kondapalli C."/>
            <person name="Gourlay R."/>
            <person name="Campbell D.G."/>
            <person name="Ritorto M.S."/>
            <person name="Hofmann K."/>
            <person name="Alessi D.R."/>
            <person name="Knebel A."/>
            <person name="Trost M."/>
            <person name="Muqit M.M."/>
        </authorList>
    </citation>
    <scope>PHOSPHORYLATION AT SER-65</scope>
    <scope>MUTAGENESIS OF SER-65</scope>
</reference>
<reference key="16">
    <citation type="journal article" date="2014" name="J. Cell Biol.">
        <title>PINK1 phosphorylates ubiquitin to activate Parkin E3 ubiquitin ligase activity.</title>
        <authorList>
            <person name="Kane L.A."/>
            <person name="Lazarou M."/>
            <person name="Fogel A.I."/>
            <person name="Li Y."/>
            <person name="Yamano K."/>
            <person name="Sarraf S.A."/>
            <person name="Banerjee S."/>
            <person name="Youle R.J."/>
        </authorList>
    </citation>
    <scope>SUBCELLULAR LOCATION</scope>
    <scope>PHOSPHORYLATION AT SER-65</scope>
    <scope>MUTAGENESIS OF SER-65</scope>
</reference>
<reference key="17">
    <citation type="journal article" date="2014" name="Nature">
        <title>Ubiquitin is phosphorylated by PINK1 to activate parkin.</title>
        <authorList>
            <person name="Koyano F."/>
            <person name="Okatsu K."/>
            <person name="Kosako H."/>
            <person name="Tamura Y."/>
            <person name="Go E."/>
            <person name="Kimura M."/>
            <person name="Kimura Y."/>
            <person name="Tsuchiya H."/>
            <person name="Yoshihara H."/>
            <person name="Hirokawa T."/>
            <person name="Endo T."/>
            <person name="Fon E.A."/>
            <person name="Trempe J.F."/>
            <person name="Saeki Y."/>
            <person name="Tanaka K."/>
            <person name="Matsuda N."/>
        </authorList>
    </citation>
    <scope>PHOSPHORYLATION AT SER-65</scope>
    <scope>MUTAGENESIS OF SER-65</scope>
</reference>
<reference key="18">
    <citation type="journal article" date="2015" name="EMBO J.">
        <title>Ubiquitin Ser65 phosphorylation affects ubiquitin structure, chain assembly and hydrolysis.</title>
        <authorList>
            <person name="Wauer T."/>
            <person name="Swatek K.N."/>
            <person name="Wagstaff J.L."/>
            <person name="Gladkova C."/>
            <person name="Pruneda J.N."/>
            <person name="Michel M.A."/>
            <person name="Gersch M."/>
            <person name="Johnson C.M."/>
            <person name="Freund S.M."/>
            <person name="Komander D."/>
        </authorList>
    </citation>
    <scope>PHOSPHORYLATION AT SER-65</scope>
</reference>
<reference key="19">
    <citation type="journal article" date="2017" name="Mol. Cell">
        <title>Ubiquitin Modification by the E3 Ligase/ADP-Ribosyltransferase Dtx3L/Parp9.</title>
        <authorList>
            <person name="Yang C.S."/>
            <person name="Jividen K."/>
            <person name="Spencer A."/>
            <person name="Dworak N."/>
            <person name="Ni L."/>
            <person name="Oostdyk L.T."/>
            <person name="Chatterjee M."/>
            <person name="Kusmider B."/>
            <person name="Reon B."/>
            <person name="Parlak M."/>
            <person name="Gorbunova V."/>
            <person name="Abbas T."/>
            <person name="Jeffery E."/>
            <person name="Sherman N.E."/>
            <person name="Paschal B.M."/>
        </authorList>
    </citation>
    <scope>ADP-RIBOSYLATION AT GLY-76</scope>
    <scope>MUTAGENESIS OF HIS-68; ARG-72; ARG-74 AND GLY-76</scope>
</reference>
<reference key="20">
    <citation type="journal article" date="2020" name="Mol. Cell">
        <title>Threonine ADP-ribosylation of ubiquitin by a bacterial effector family blocks host ubiquitination.</title>
        <authorList>
            <person name="Yan F."/>
            <person name="Huang C."/>
            <person name="Wang X."/>
            <person name="Tan J."/>
            <person name="Cheng S."/>
            <person name="Wan M."/>
            <person name="Wang Z."/>
            <person name="Wang S."/>
            <person name="Luo S."/>
            <person name="Li A."/>
            <person name="Guo X."/>
            <person name="Feng M."/>
            <person name="Liu X."/>
            <person name="Zhu Y."/>
            <person name="Zhou Y."/>
        </authorList>
    </citation>
    <scope>ADP-RIBOSYLATION AT THR-66 (MICROBIAL INFECTION)</scope>
</reference>
<reference key="21">
    <citation type="journal article" date="2021" name="Nat. Chem. Biol.">
        <title>K29-linked ubiquitin signaling regulates proteotoxic stress response and cell cycle.</title>
        <authorList>
            <person name="Yu Y."/>
            <person name="Zheng Q."/>
            <person name="Erramilli S.K."/>
            <person name="Pan M."/>
            <person name="Park S."/>
            <person name="Xie Y."/>
            <person name="Li J."/>
            <person name="Fei J."/>
            <person name="Kossiakoff A.A."/>
            <person name="Liu L."/>
            <person name="Zhao M."/>
        </authorList>
    </citation>
    <scope>FUNCTION (UBIQUITIN)</scope>
    <scope>UBIQUITINATION AT LYS-29</scope>
</reference>
<reference evidence="25 26" key="22">
    <citation type="journal article" date="2018" name="Structure">
        <title>A Structure-Based Strategy for Engineering Selective Ubiquitin Variant Inhibitors of Skp1-Cul1-F-Box Ubiquitin Ligases.</title>
        <authorList>
            <person name="Gorelik M."/>
            <person name="Manczyk N."/>
            <person name="Pavlenco A."/>
            <person name="Kurinov I."/>
            <person name="Sidhu S.S."/>
            <person name="Sicheri F."/>
        </authorList>
    </citation>
    <scope>X-RAY CRYSTALLOGRAPHY (2.61 ANGSTROMS) OF 152-228 IN COMPLEX WITH SKP1; KMD2A AND KMD2B</scope>
    <scope>INTERACTION WITH SKP1-KDM2A AND SKP1-KDM2B COMPLEXES</scope>
</reference>
<reference key="23">
    <citation type="journal article" date="2015" name="Mol. Cell">
        <title>K29-selective ubiquitin binding domain reveals structural basis of specificity and heterotypic nature of K29 polyubiquitin.</title>
        <authorList>
            <person name="Kristariyanto Y.A."/>
            <person name="Abdul Rehman S.A."/>
            <person name="Campbell D.G."/>
            <person name="Morrice N.A."/>
            <person name="Johnson C."/>
            <person name="Toth R."/>
            <person name="Kulathu Y."/>
        </authorList>
    </citation>
    <scope>X-RAY CRYSTALLOGRAPHY (3.03 ANGSTROMS) OF 1-76 IN COMPLEX WITH ZRANB1</scope>
    <scope>UBIQUITINATION AT LYS-29</scope>
</reference>
<reference key="24">
    <citation type="journal article" date="2015" name="Mol. Cell">
        <title>Assembly and specific recognition of K29- and K33-linked polyubiquitin.</title>
        <authorList>
            <person name="Michel M.A."/>
            <person name="Elliott P.R."/>
            <person name="Swatek K.N."/>
            <person name="Simicek M."/>
            <person name="Pruneda J.N."/>
            <person name="Wagstaff J.L."/>
            <person name="Freund S.M."/>
            <person name="Komander D."/>
        </authorList>
    </citation>
    <scope>X-RAY CRYSTALLOGRAPHY (1.68 ANGSTROMS) OF 1-76 IN COMPLEX WITH ZRANB1</scope>
    <scope>UBIQUITINATION AT LYS-29 AND LYS-33</scope>
</reference>
<reference evidence="24" key="25">
    <citation type="journal article" date="2015" name="Nature">
        <title>Mechanism of phospho-ubiquitin-induced PARKIN activation.</title>
        <authorList>
            <person name="Wauer T."/>
            <person name="Simicek M."/>
            <person name="Schubert A."/>
            <person name="Komander D."/>
        </authorList>
    </citation>
    <scope>X-RAY CRYSTALLOGRAPHY (2.62 ANGSTROMS) OF 153-228</scope>
    <scope>PHOSPHORYLATION AT SER-65</scope>
</reference>
<reference key="26">
    <citation type="journal article" date="2015" name="Nature">
        <authorList>
            <person name="Wauer T."/>
            <person name="Simicek M."/>
            <person name="Schubert A."/>
            <person name="Komander D."/>
        </authorList>
    </citation>
    <scope>ERRATUM OF PUBMED:26161729</scope>
</reference>